<sequence>MEGNEKKGGGLPPTQQRHLNIDTTVGGSISQPVSPSMSYSTDRETVMRSASGHATVAETHLIRSIGSQSQSYTEEHWSSEITSFVALAPPKFIQVIKAYRVHSTDTISLVVEVASDPPAIFEWFYNEKSVLQDRDRFQVGHGINISRLKVSRPEQGVYKCVTRNPAGVSTSYGYITVNADREHLSSSKEDMRLQRQHSVTYHQAPRFLTQVPNLFVTAGSNVIIDVEVDANPPARFSWFVNGKEYRDSIHGVEMFSPDVNRSVVRFSIPVAGEYKVVASNVHGSAMSCGHVDIQKVIELEESTLTTSTTAFDPMTTSMRALGNNGRNSRQAVNMFELNYTQRSSSVPRGVRHLESHIEVSNMTGEEKKTQQQTRTDAASIVESRFHPQPPKPPRAGTSRRFLPEPPKFVTTLPSVITVNAEEKLVLSVDVQAIPAAEFAWHVNGFEVKKSQSVVLLDEHNKSTLVLHPPVKQGKYKVTARNDVGSDSVTTQVTRIGEVKDGAGSEPPDIVESAVTVTCSHEEDVGSHSSLQTVRRIQEMQEEDEVDPIKPFIEATSPKVKESVEHPFANILNPKKREERLSPSGKGKHLLFAPRITAHPSESVFKILDGSPLKLRVMASSLPPATFLWMLNNFELRSNQNVTIRNDEENSSEIEFQKAPNGNVTVSAKNHLGEDRWTGKVILQYESPPPGQKITTIEKVTESWTLEEAVITQVVPTAADPGDRIVIIVRFDENKTSNCQFNWTINGVNIEKLEENLVAVESTEFESSLIVEKLEEQLCGEVVCVVKNQHGEVFSSSAHLRIRDDDSSFEIVPPNLPEECAPKIVEPLHSASFLDGQAMSLRCKITANPSAAVVWSKDDVNVEDWVLNKDVTTTVLDGGVCELLNPECFAEDAGLYKCTATNPHGTAETAAFINVEGAEYIKDHEEAEISESVLTDDVHIILPPKFIETLTAETDNFQQLGYVRMVATVRSVAPITVSWQKDGMDIYENEKYEVMQFADGAQILTIRAPTNLDSGVYTCTAESEHGVSNSSCQVELTISAESSPESFEKVEITPPEEVKETGIDDDIEVILKEEVSGTAQIEKREEEFKLLVKVADQVASTLVANVFLEAVHEAVKKIVETEDEEEDNQIEATQEPRFETSTDEYHVKENGTIKMAATISGHPTPFLEWYFGEEKLQVSQNVSMYYEAGTSAIILKNVQKRQGGNYFLRAHNCHGESILPMKLTVDPIEAVTHVLETSIPKVVVEQDAKEEEVRRAAEIISEQFAQLWVQDAQTEAVSAQAHQTPVVAEQASEEPTLPEVVAALQEQKPSVEKAPQPQFEVLETEDQDVVEQMQKQLPPVQKSMSVQEEKASSQRTPSPMNYEDKVKTIQSNLLRVNSHEAMEPIEATNLLLNTALQLKNEHVCDETTTVIVTQQPQKYDQLVTVVESNIEYHALRLSTSSSSPLKFIDLETIIQKPSTSCESIDRMFVEKSKRTANAQHRIVVLQGMSNTFHNAITWSLKKVKKLVGDAEAKAYADVEVVKQDETNEQVMTIIDNDTIVPQLLQVAAAANKLKLENVSVALIKEGDRAHQELVIEYESSIDEPMFEPVHNTSHLTFHQQQPTGPDQHVWSRRSKFEEDEAHVVAVFVEVDANCPDQSVEIVATVNAAYEGDNRQGIEDEPFTEVSQSLATESSAAPQAPKFLRKLVNCFGRIGEPVQLKCLIAGMPQPEIEWTVDGDPIVPNDEYSIVYEDGVCILRIESTLIEDEGEYCCTASNVAGTTFSKCYLKLSEADDDAVDLLRQLSEIKIIDPTLSTGYPMSMISDEENTSHQLLSNVLLTDKEVPITATYNEDLSRAESFRRFFESAETTVKVTELYQGESVEAQFQQPEKREQVSTSNTDVMFVNQKVDVMESTVSTVGNAVRQSVSSSTNSWDYMFNDPFPESQEINVIENELYEPRVPLLPQKLSYKGQEIFANTNTVERNSKAGAKAKGEVENLKKCVETLLLFDAEMDMKDIKESSPKKEIISKKDQQSLDDQIKVTQQILKDVERDLNKMERTSPGKSLSPNKRTFAPKDVEDIEAAIFSISDQLADRQSSEEALREALQEMILSNSSPMKELSRNNETSKPEVLKSEIQKIPEVETKISEVYPIVKLKQAISAIENSLLEDTEVTEIMKRKGSDKDKRKATRIKRVPSAHSARITPITSNLRDRLNQLHQLTVSEDSGSLKQNEEAKEIQELFVKIEKEINTIAELCKEKMTKKGADTVTHVLNSVLQHVASIINVILVAQDHQPIEVHAETTKTAEVSVWYSFDVHPESEDIIGIVDEEPTNRRPSSTPRGSTRSSNLTTSQDSQATTKMTVSSEDTIEAPIAPPRKGRSLSRDAERLLEIQPRAPPRRSRQSGDTLSPEPTPVLTLVKSDETPAPVRPPRSRSRHSGDELAETSPEAQPIRPPRSHSRHSGDELEEVQPVRPPRSKSKTADANCLQIESMDESQYSLSCIHIQKTNFAFTNSTHETSNASVVVDLRNMAQLECTVQSLDDLASIQMLCEESDYPSDTDRSLLLAGTVRYFNRASPSLHEVSPSLNMESVSMDLKPETEPEEIVQDVYVNVELHSVPSLSSLVEVNPNTLMQTLASEKSSLKAAEEDEKEGEEEGEEEVTADVSFIGRSVLSTETLDVVLEEKDMSQMNSTLPLDYERAFSSNTIRETDILSDESITVDSSYHKSPEPTVDFARSQVKSEEVTENFSLIHKPARRRVTGIVVNSLIYTIAANIAEDNTFDVDVVQEPQRYNISIKVIEDIVDFTSLTIMSDCEDDPPADVLVLKQDTSKLQALSYDDISVATTRTGITVSIVARSLNDGIYASLEEIAWGEVEMTVPDIMQMSTEEKSSLQFNVTVSESNLEEAKSLKSQVSFRSSQNSVSEMDNTISSTATISIPSYVVKLESTATITCELNNYLPKNCTIDWYCGKTKIIIDHEQFDRISHDLLEVLIIRSVEAINGNLYSLKINEDLFPVAYLIVENTNLTTSANILTRPETQFVMEGQPTVITVELDDPNVIVNWLKDRRPLHENERIRLETDGQGNHRVIIPNTCVGDQGTYLALTSSESVAITLVVEERIEEKEVMVIASGTESEEDDVQEYLVPPGSTATIACELEECELKRSIRWLRDGKDIRFEQGKTEHVQNGLKHYLVVHDATSLDSGLYKTERSEEQCEETIIPRGVVATIQCQTSEPQESIQWSKDGNIIPSDISRFEFRSLDNNQSHEMVISNISWSDAGVYSVLINGKSSFVSKIVVVESELITQSVEEEPEAEPEIDVSLHIVESEQIIELNVPQSPKLGASHETLVPIGQDDIEVIDKQEAAPVVESIEETSSIGSEEFEIIEKFTEEEVPKVAEPSEPTQADVPKIAAPLEQSQIQQEVPTVAAPSEPTQADVPKEAAPSEPSQADVPKVAAPLEQTQIQQEVPMVAAPLEPTQADVPKVAAPLEQSQIQQEVPTVAAPSEPTQADVPKEAAPSEPSQADVPKVAAPLEQTQIQQEVPMVAAPLEPIQEEVPKEAAPSEPTQEDVPKGAAPLEPTQEDVPKEAAPSGPTQEDVPKEEAPSEPTQEDVPKEAAPSEPTQENVPKEAAPSEPTKDVPKEAAPSEPIQEEVPKEATLSEPTQEQSEVSKRSEPVEPTQIQQAASEEETPLEETNETVVQTNEDVKEAEVPENAEAQKVVDSSDLQVAASEIAHLAIDEAVLETSNQPSQFDSLQEQKPSVVHENEHVRSVCVDLTFSRDSEQIVSDVIVAEVGYDEDECSTIADTITSLSSSPLYTAPVFTERLPSSACFANSKLTLEVMFSGVPQPTISWLIDDHELVSDGERISIKCENGVSAIRFFNVDRNAGGFLKCRATNCAGQVETSCEIVAADEISVISDSSITSSTRPHFVVPLPERVTHTVNDHITIKCKFSGQPLPAAMWEKDGVLLDLQKYQVTTEDGTSILKIESASLDDKAVYTCTIANEAGCESTSCTIDVVDDHLGLQQTGLHVMCERDQNDVELDILVQSPNHLGVTFNFPPVNRTLARQPPYFLLPLSDKVVIDEKCTLKCVVMGIPLVIVKWIVDGVVVTEDDNHEIHFEDGIALLRMKNIKKDKSVVQCEAINCKGKVTTSCVLTKCGVEESEAGDLQKPSFVLSLKDTCTTTDHATLKCIVVGTPLPDVSCSFNGVTDNSKIRSEDGIVLIQVNDVTEEGIVVECTISNETGSSTSNCVVKIIKQEEKNYQRPIIVFNQAGSVNNERELSVKVGVIASPEPTLFWKHNGKSIEEGGDYYLIFEDGIGILKVFNIQDGSHEFTCIAKNEYGQTTVEIPVEIGLKTENKLTLVKTLNDIAVVDDIVQLKIVAEGDLPIEFKWFEDGQILEDDSSHKITVDKCISTLQLKLEETGTRIITCEVSNSSSKVNASCNVERVHNTVSDFVMTNDNSTRFLAVGRKCTRERNNTILKAVVVARENIGDICEIDGEKIPDAYIEGNSLSIKVDTLSKKLSNVSFKVSASEGKVFETRKIEIAQEDTDEENFEINYSLRIDEQSGNTTYTFENSELYQGNQSRELDNTERNFTVNKEKDESKKPSEVQPAEIVEQKDVPVQETSAPTVEKLAPVESKETPEVQAAEIVEQKDVPVPETRAPTVEPTVEKHTPVDSKETSEVEPAEIVEQKDVPVPETSAPTVEPTVEKHTPVESKEKSEVQPAEIVEQKDVTCEEEIKELLTEVEVELFFSQAEVFSGLELDLLMECSEYVTTSIQKGSTAAPAQEPTVEKLAPVESKETSEVEPAEIVEQKDVPVPETSAPSVEPTVEKLAPVESKETSEVQQAEIVEQKDVPVPETSAPSVEPTVEKLAPAESKETSEVQPAEIVEQKDVTCEEEIKELLTEVEVELFFSQAEVFSGLELDLLMECSEYVTTSIQKGSTAAPAQEPTVEKLAPVESKETSEVQQAEIIEQKDVPVPETSAPTVEPTVEKLKPVESKETSEVQQVEIIEQKDVPVPETSAPTVEPTVEKLAPVESKETSEVQQAEIIEQKDVPVPETSAPTVEPTVEKLKPVESKETSEVQQVEIIEQKDVPVPETSAPTVEPTVEKLAPVESKETSEVQQAEIIEQKDVPVPETSAPTVEPTVEKLKPVESKETSEVQQVEIIEQKDVPVPETSAPTVEPTVEKHAPVESKETSEVQPAEIVEQKVVPVPETSAPTVEPTVEKLAPVESKETPEVQPAEILEQKDVTCEEEIKELLTEVEVELFFSKAEVFSGLELDLLMECSEYVTTSIQKGSTAAPAQEPTVEKLAPVESKETSEVEPAEIVEQKDVPVPETSAPTVEPTVEKLKSVESKETSEVQQAEIIEQKDVPVPETSAPTVEPTVEKLAPVDSKETSEVEPAEIVEQKDVTCEEEIKELLTEVEVELLFSQAEVFSGLELDLLMECSEYVTTSIQKGSTAAPAQEPTVEKLAPVESKETSEVEPAEIVEQKDVPVPETSAPTVEPTVEKLKSVESKETSEVQQAEIIEQKDVPVPETSAPTVEPTVEKHAPVESKETSEVQPAEIVEQKVVPVPETSAPTVEPTVEKLAPVESKETSEVEPAEIVEQKDVPVPETSAPTVEPTVEKLAPVESKETSEVEPAEIVEQKDVPVPETSAPTVEPTIEKLAPVESKETSEVEPAEIVEQKDVSVPETSAPTVEPTIEKLAPVESKETSEVEPAEIVEQKDVSVPETSAPTVEPTVEKLAPVESKETSEVEPAEIVEQKDVPVPETSAPTVEPTVEKLAPVESKETSEVQPAEIVEHKDVQVPETSSPTVEPTVEKLAPVESKETSEVEPAEIVEQKDVPVPETSAPTVEPTVEKLAPVESKETSEVEPAEIVEQKDVPVPETSAPTVEPTVEKLAPVESKETSEVQPAEIVEQKDVSVPETSAPTVEPTVEKLAPVESKETSEVQPAEIVEQKDVPVPETSAPTVEPTVEKLAPVESKETSEVQPAEIVEHKDVQVPETSSPTVEPTVEKLAPVESKETSEVEPAEIVEQKDVPVPETSAPTVEPTVEKLAPVESKETSEVQPAEIVEHKDVQVPETSAPTVEPTIEKLAPVESKETSEVEPAEIVEQKDVSVPETSAPTVEPTIEKLAPVESKETSEVQPAEIVEHKDVQVPETSSPTVEPTVEKLAPVESKETSEVQPAEIVEQKDVTCEEEIKELLTEVEVELFFSQAEVFSGLELDLLMECSEYVTTSIQKGSTAAPAHEPTVEKLAPVESKETSEVEPAEIVEQKDVPVPETSAPTVEPTVEKLAPVESKETSEVEPAEIVEQKDLPVPETSAPTVEPTVEKLAPVESKKTSEVEPAEIVEQKDVPVPETSAPTVEPTVEKLAPVESKETSEVEPAEIVEQKDVPVPETSAPTVEPTVEKLAPVESKETSEVEPAEIVEQKDVPVPETSAPTVEPTIEKLAPVESKETSEVEPAEIVEQKDVSVPETSAPTVEPTIEKLAPVESKETSEVEPAEIVEQKDVSVPETSAPTVEPTVEKLAPVESKETSEVEPAEIVEQKDVPVPETSAPTVEPTVEKLAPVESKETSEVQPAEIVEHKDVQVPETSSPTVEPTVEKLAPVESKETSEVEPAEIVEQKDVPVPETSAPTVEPTVEKLAPVESKETSEVEPAEIVEQKDVPVPETSAPTVEPTVEKLAPVESKETSEVQPAEIVEHKDVQVPETTATTFEPTKEKLAPVDSKETSEVQTAEIVEQKDVPVPETSATTVEPTKEKLAPGESKETSEVQQAAIVEQKDVAVPETSATTVEPTKEKLAPVESKETSEIQTAEIVEQKDVPVPETSTSYVEPTKEKLAPGESKETSEVQQAAIVEQKDVPVPETSATTVEPTKEKLAPVESKETSEIQQAAVVEQKDVPVPETSATTVEPTKEKLAPVESKETSEVQQAAIVEQKDVPVPEANAPTFEPTVEKLAPVESKETSEVQQAAIVEQKDVPVPEANAPTVEPTVEKLAPVESKETSVESKETQADAKLKKEKDDKHKQEADAKLQKENDDKLKQEADAKLKKENDDKLKQEADAKLKKENDDKLKQEADAKLKKENDDKLKQEAAAKLKKENDDKLKQEADAKLKKENDDKLKQEADAKLQKENDDKLKQEADAKLQKENDDKLKQEADAKLQKENDDKLKQEADAKLQKENDDKLKQEADAKLQKENDDKLKQEADAKLKKENDDKLKQEADAKLKKEKHDKLKQEADAKLQKENDDKLKQEADAKLQKENDDKLKQEADAKLQKEKDDKLKQEADAKLKKEKDDKLKQDADAKLQKEKDDKLKQEADAKLKKEKDDKLKHEADAKLQKEKDDKLKQEADAKLKKEKDDRLKKDADAKLQKEKDDKLKQEADAKLKKEKDDKLKHEADAKLQKEKDDKLKQEADAKLKKEKDDKLKQEADAKLQKEKDDKLKQEADAKLKKEKDDKLKQEADAKLQKEKDDKLKQEADAKLKKEKDDKLKQEADAKLQKEKDDKLKQEADAKLKKEKDDKLKQEADAKLKKEKDDKLKQDADAKLQKEKDDKLKQEADAKLKKEKDDKLKHEADAKLKKEKDDKLKQEADAKLKKEKDDKLKQDADAKLKKEKDDKLKHEADAKLQKEKDDNFKQEANAKLQKEKDDKLKQEKDDNFKQEANAKLQKEKDDKLKQEKDDKLKQEADAKLKKEKDDKLKQEADAKLKKEKDDKLKQEADAKLKKDKDDKLKQEADAKLKKEKDDKLKQEADAKLKKDKDDKLKQEADAKLKKDKDDKLKQEADAKLKKEKDDKLKQEKNDKLKQEADAKLKKEKDDKLKQEADAKLKKEKDDKLKQETDAKLKKDKDDKLKQEADAKLKKDKDDKLKQEADAKLKKDKDDKLKQEADGKLKKEKDNKLKQEADGKLKKEKDNKLKQEADAKLKKEKDDKLKQEADAKLKKEKDDKLKQEADAKLKKDKDDKLKQEADAKLKKEKDDKLKQEADAKLKKDKDDKLKQEANAKLQKEKDDKLKQEADAKLQKEKDDKLKQEADAKLKKEKDDKLKQEADAKLQKEKDDKLKQEADAKLKKEKDDKLKQEADAKLQKEKDDNFKQEANAKLQKEKDDKLKQEKDDKLKQEADAKLKKEKDDKLKQEADAKLKKDKDDKLKQEADAKLKKEKDDKLKQEADAKLKKEKDDKLKQEADAKLKKDKDDKLKQEADAKLKKDKDDKLKQEADAKLKKEKDDKLKQETDAKLKKDKDDKLKQEADAKLKKEKDDKLKQEADAKLKKEKDDKLKQEADAKLKKEKDDKLKQEADAKLKKDKDDKLKQEADAKLKKDKDDKLKQEADGKLKKEKDNKLKQEADGKLKKEKDNKLKQEADAKLKKEKDDKLKQEADAKLKKDKDDKLKQEADAKLKKEKDDKLKQEADAKLKKEKDDKLKQEADAKLKKDKDDKLKQEADAKLKKDKDDKLKQEADAKLKKEKDDKLKQEADAKLKKDKDDKLKQEADAKLKKDKDDKLKQEADAKLKKEKGDKLKLEDQTNQSRIFEETSIEVTSLLKCKQQAIIVSKSFALCERVVLNAEEPFTLEVFCNAVFVKQRTDKIGIGIIFERSGASKKDESRPDRLDDNCVLTDVTDGLSILSPPPKAKKHLKKKKKHHKKEKIAVKETEQDEKTVSHLKPEISGMERKRSNSGSSDIFVDVDIEAGEESIHTDALVDLNFYDYDQMELSIFEDYDSDDDSASIDCDVSLSNVAADDGIDVFPSDGDTQEVEQKVTLPKKHQSDEDVISKEEENLETSVSYGSIEETVSFTIGTGQSIIEHPKSHAVGQMNSEVIIKCKTSQPISDAKWFCNGMVLLPDEQVNMTVTGCEAVLRLVKFLPQNKGNYHVLIDGSIGSQPAILSGPVPPVILNKLTKPITHQAGKSFTYKFNFMGAPAPRLRVLSNGEPVSFDVKYEIYDNIASLYIPKMSKRDGGEYTVVLENKYGKDESDLHITMVDTPLKPRKAQLVALTDTSATFKWLPPHTGESDILHYIVMRRSTESRRWRNIGHVQEKTFTAIELVPNEFYAFRIVAVNGFGEGAPSEIIEVNTLDYDQEESFDFAGEEELKLDDVQVNNEVVTEITIEESEVTIEEHRKLKKKSKKSKKTTDEPELDSEIALEVSSDITSSLEITTESTIPDTAPESQETLNVEIAVTETTVQKITNPSDESAKKDVNEDTAVSSIVKKDDKDVNKKSLPESGLTTKKEIQGKPEKKIMKKKTEKADSSISETSETLTKDLTQTKQSEPEPAKRTTETSVQDEVKRKTETTSKSKQTTEEHPQPGGKSDSSISSTSDASEVKQVQQSESEAQKVTEKPETAKLESKSKMTEDTTKESDNKETVDEKPKKKVLKKKTEKSDSTISETSETSAVESAGPSESETQNVAAVDKEKKQKETDEKQKLEAEIAGKKSTEQKSKLEAEAKLKRAAEEDAAKKQKEKTEAASKKAAAEKLELEKQAQINKAAEADAVKKQNELDEQNKLEATKKLAAEKLKLEEQSAAKSKQAAEEQAKLDAQTKAKAAEKQTGLEKDEKSNKDSGSNETVEEKPKKKVLKKKTEKSDSSISQKSDTSKTVAESAGSSESETQKVADATSKQKETDKKQKLEAEITAKKSADEKSKLETESKLIKAAEDAAKKQKEKEDKLKLEADVASKKAAAEKLELEKQAQIKKAAEADAVKKQKELAEKQKLESEAATKKAAAEKLKLEEQAQINKAAEADAVKKQKELDEKNKLEANKKSAAEKLKLEEESAAKSKQTVEEQAKLDAQTKEKTAEKQTGLEKDDKSTKDSESKETVDEKPKKKVLKKKTEKSDSSISQKSVTSKTVVESGGPSESETQKVADAARKQKETDEKQKLEAEITAKKSADEKSKLEAESKLKKAAEVEAAKKQKEKDEQLKLDTEAASKKAAAEKLELEKQAQIKKAAEADAVKKEKELAEKQKLESEAATKKAAAEKLKLEEQKKKDAETASIEKQKEQEKLAQEQSKLEVDAKKSAEKQKLESETKSKKTEEAPKESVDEKPKKKVLKKKTEKSDSSISQKSDTAKTVAESAGQSDSETQKVSEADKAHKQKESDEKQKLESEIAAKKSAEQKSKLETEAKTKKVIEDESAKKQKEQEDKKKGDDSAKKQKDQKEKQKLESEATSKKPTSEKQKDEKTPQEKAKSENETVMTTEPQQLEVKSEPKKSDKTETVEKEVASSTEKSDDSKTKEPKEKKKIIKKKKDTTKPQEASKELSSDESRIDLESDISLSLDTVTESDDLSTASTIKLQKESDESGIDSRMGQTSEAEDSPFISQPVSATVTEMAGEAKFTVKFSRKPIYVKWMRDDREIRVAYGKASVETTDDSSVLVIKNIDGKDVGNIYAVFDSEYRSAMARLDLRVPCKITLESSSNAPEIVAGKNLDLSFKISGYPLPTNIELLHNNENLRTRSDVTDFDDSISIRMKRLKLEDSGEIKIIGKNDSSEDQLRIPINVIEVTSKPTSLQVTSTERETVTLTWSLPTELNGSNVNEYLVERKTVDGGRWRHACTVTDSRAVVDGLFSGTEYVFRVVAVNGAGQSAPSDTIEATTQAEEEIDETVPTSPVEKVKEPVSKKPENTKESEGHKKRDRKESEDHDENNLGKSGKDEFATSGESGTSNQNEESAQLNTSFTSTEQHGQTEKQVRKGTRKSLTRSLNIRESDIDADVVEVEYDEQGDDIPSDPTTSGTYAFDKIEEEPARTSGEMAMAEKDSDAMEVRGLNKKLSKKGGKEGTSTEKSSSKTKKQEKSALSVQEMNKSLKKKGEKGEAETAASDFIENADQTGMSIQDLNKSMKKKVESGEATGQINDASNNKDADELSIQDSQQSLKKKSENESVTGEQLDKSQEVEDDKMTIQSLKKSIKKKPESREVSGGKSEKSKEKESDEMSIQQLNKSVKKKPENEAVTQGKSGKSQEQESDKMSIQALNKSMKKKDGVDGVEGNINIGRSDGDQLSVNDIDAELSTSEQVENASQNLGATADSDGDSLSLQTLKKRISKKGIHGEAESKLGEKQSGSDSFTLQDLYEELKAKEDAVEAGAETSNADQSAEKTSLEVRDMKKKMKKKQVSGTAENLIGESNRDETSMEIRDLNTQHSNQTGEDESSTFNFGQKDQEQYSMVMKDVSKKLARQNAEEIQSGKLIPTTNEEKTGLALTGKNKNLKKGEENEKTKFEAKHLGSSSASDSLAESTLRSKKTKKGEVEKSELSIDMKNQDKTTLATTLLEDDLAKTTSAEESEAEHLVALQNKEKTSLAMRRKRVSFDSSTKSESIEDVIPDKNRDSDKMSITGIKKKMSQKSESAEAQKNESPEVKEISSFEEKTLKSKKKSKADRNQGTEANLGDKTIDKDYLSVTDKNQSLEKSEASGQAEKSIKAPNKSKVTTSFADESLTSELDRLMADEEMAEMMFAEEEKAADLLNVMNKNKGLNKSEQEESQEISLKSQSKVKDSDSLSSTDKKIGLKKSDKDQKLGTSKIFGSKDQESVGYEEKTSNFSKQRRGVSDLGSDAMTDQKNVQESQYAEISADDHMSKTGADGEISATRTIVDGSDAAQGSEYAEISKKRKFKRAEQIGEAETSLCDSRENTHDSLSISDVNPELRRSNVEISAFGQIDLTAEEVTSLTDINKDAQLTKKQDENDAKKSVSKNLKAGAKKDSDTLSITSKKDKFGKRQDSREASATVEQQGEEKVTKNLKGSRGKKEKLGDAGIDVNFENQEEFASTTGDIESIVSEKGHDTYSEKTVKSSKKKSPQTAGAEYGGSESLNASSALSTTDVDAQLKNQEKDGVAESSIGKSNQKDSYSEQELNVNKKKKQAVGAAMNQGSGSTKESDNLAVASVESNLAKDSANQEASLHGLVDNDATSLSQLDSEHRLKKRDDELSAHTKLGKHTQSENIALTETDDSLVKGDSEESAELNIKQQGETAEDKYVESRKKTTLKKKPEQKQVTDTLSAVDGRHDTTSLSVADSGISFDKSMENELAGSGDGTASASVSAKVRGADGNAKTNLISSFEKPGQESKTSKTLSGKQKKQEKSSFAEKNAGFDLSMGEGKNDESVESSLQKNRDADSLALQGTDLAFSKPSDSSANAHLDMPQRELTLRICQAETVDWSDDSEVEEGTRTSAPGEVKKKKKFIISAISQDGEFSDAESITFDENGVRVEKRRRKKRDPKEYMGAGELAMRIPAFAKKMQYIGCIEGDVVVFTIKVVSDDVPLIRMYRNDFPVANFDKMAFEGFTKGSEHSFNVTINDIRKLDGGKLVFEAKNDYGVDKCTILLDVRDSGSFIEDYSEIHRSAEIQNSVGDVQVKEGETAKLTGRVDGFPLPELIWIKNGKEIDMMVPSTKYQLDYHSDGEFEARIANCTFEDDDDYSLLVENLAGVDSCNFQVFVDCNEYPDDEHFNRRRRLQRGRRVMEASSDSELDDAKKRKKRRIKRVVERRNPNAPRLTQLIPPRFDKILSDHDAIEGENVVMMVETLGEPEPQVRFYRDGKLIDDGSGDRMEVRHEDEMRKHWLILKDICKDEEAEYACQAINVAGEAWCFSDVVVHMSEESRDDDKSVDEVDDSTVLEEKKDDGDDKSKPKTKKKIIKKKETPESEQVTAAEPEQQKISEVDVQSVAETEVGAKKKPDAEKPTDLSKAKKDSKSKKSDEPEASTEEKSTTEKPTNDKTSKKSAEKKTVKPKKEVTGKPLEAKKPVEDKKDASQPSSSKESSPPTDGKKKKQIPKALFIPDEISSRFGDPSTMHSETNITTTIRGREGSADAKTPLVEPLSASVSMKVESAKEKAEFSFKRRSETPDDKSRKKEGLPPAKKSEKKDEVTAEKQSTEALIESKKKEVDESKISEQQPSDKNKSEVVGVPEKAAGPETKKDVSEIEEVPKKKTIKKKTEKSDSSISQKSNVLKPADDDKSKSDDVTDKSKKTTEDQTKVATDSKLEKAADTTKQIETETVVDDKSKKKVLKKKTEKSDSFISQKSETPPVVEPTKPAESEAQKIAEVNKAKKQKEVDDNLKREAEVAAKKIADEKLKIEAEANIKKTAEVEAAKKQKEKDEQLKLETEVVSKKSAAEKLELEKQAQIKKAAEADAVKKQKELNEKNKLEAAKKSAADKLKLEEESAAKSKKVSEESVKFGEEKKTKAGEKTVQVESEPTSKKTIDTKDVGATEPADETPKKKIIKKKTEKSDSSISQKSATDSEKVSKQKEQDEPTKPAVSETQMVTEADKSKKQKETDEKLKLDAEIAAKTKQEADEKSKLDAQEKIKKVSEDDAARKEKELNDKLKLESEIATKKASADKLKLEEQAQAKKAAEVEAAKKQKEKDEQLKLDTEAASKKAAAEKLELEKQAQIKKAAGADAVKKQKELDEKNKLEANKKSAAGKLKIEEESAAKSKQTVEEQAKLDAQTKAKTAEKQTKLEKDEKSTKESESKETVDEKPKKKVLKKKTEKSDSSISQKSETSKTVVESAGPSESETQKVADAARKQKETDEKQKLEAEITAKKSADEKSKLEAESKLKKAAEVEAAKKQKEKDEQLKLDTEAASKKAAAEKLELEKQSHIKKAAEVDAVKKQKELEEKQRLESEAATKKADAEKLKLEEQKKKAAEIALIEIQKEQEKLAQEQSRLEDEAKKSAEKQKLESETKSKQTEEAPKESVDEKPKKKVLKKKTEKSDSSISQKSKSAKSTVDAAETLESDFNLVEKKTVQKVEQSPDESTSATIKRDPAQKTEEISKQDDGDEKKTTTDGKPPKPEDSEATPKKRVVKKKTQKSDSVASDASLADVSKLSDDVEEKPKKKVLKKKTEKSDSVISETSSVDTIKPESVEIPTEKAEQMILHNRFSTDSAVESEPKNAHKDDTEKTTDDMMTRRKSSAIFSDDEQSISSKTSSEGRRRRRRTGFASKFASDTLALRGDNVEIEAELLAEDDTVTWKVNGKDADLNSRCHEMSHTFFRTLIIDEVEPTDSGMEITATCGTESHTTILKVEELPVDFVKYLPRKTSGKEGQEVTISVTLNHPIDISKVVWLKDGKPLEINKDYSIDTVGCSVSLTLRRAKYEDSGKYKVVCDGVDCSTHLSIQGKPVLKNVSETKPVITVDKDDQFSLLVAYDSNPEASFSMTVDGKDLEFDGRSRIDVVDDGLKLTKRGVSKTDAGEYEVKLKNEFGEVAQKFDVKVNDTPSAPGDVSVVKAESDCLHIEWTAPTEDNGAEVTSYVIEKKESGRRKFHKVATVNGKKTSYVVDDLEIETPYIVRIAAVNKFGTGEFIETKPVQTGSPFQVPTVEFPPTIDNVTSTSCSLSWPKPIEDGGSPVYGYDVYKRENEGEWQKMNGEELVFTESFNVRALSSGKEYEFKIEACNEAGLRSNSNVVSKKLTVEGLVPEIILDMPMVKVLDNDKVEVTWKSDGEKEFVVQYKSDGSSIWASVDIGGPRSESAATSKCIIDGLREGIPYVFRVAARNQHGTGEFSEPTIPVVVLADDAPRVLKAIKPVKIPKKGELRLECHAAGHPAPEYIWYKDGKEIIPTDENTEIVNEGSMSALIIHELAGEDVGLYKVLVENIHGTAESEAEVGISDVRAHFNSSFSELTEIEEGHDIELTCEVSDEEAVVNWYKDGKKLVASDRVQFYAMARKRTLRIKGSTDADSGVYKCETTDGRSRTEGEVIVNEQEPHILVGPQDAIVKDFGETMVLFCETSKPVRKVKWFKNGVEIWPQMNKAIMENDGKRATLEIKNFDKHDIGAYTASVSEKETSAPAKLVFEVAPNLIIPTEIRDGVTVHAGNEFDFAVEFSGFPIPTIHLTNNGTPLKAIAVVTEYDDSVSVRMKDVTLDNSGTVRVIAESPLGQCIKEIPLKIIDKPSAPCDLQFKEVTEDSVFLSWQPPLETNGAPLTGYVIERKAVDNNRWRPCGQVKPTKLTFVAEDLFCNQVYGFRILAVNEVGESEPCDTVDVLTLESSEPVSESSELFVPKIAILRTPQVTVAVDETKVTLRWEECPETSLYKVERKKVGDSDWLEIANTDRNKFKDRSLTESGEYVYQVTATGIHAVSSPSEETNPVKILVPGSEMPASKTEKKTDAAKSESEQKSAEEIVAEKQVDQSQASESTTEAVEEKKTKKVVKKKVAENKGEETLQEVKEKLKKGKAVEKVQDESRRGSLQASSDNESVTTTSEKRSEAELEKNSEKSAEKKSTSADLEAADKAETEKSETGKETTEKKKKVVKKVAKKGLVKADKSKIELTAGKEGEISAQVAETGVSVEWKKDGKALDASYTVTSTGGVSTVKIPIVDVNTSGVFTCKVKSSEGDEEEVSIAVTVKLPEVPKVEAEQSIVEVKVGDVAKLSAKISEPASSVNWTKDDKPIKEDGNVKAQLSPDGTAQLTISKTDSAHSGIYKLNVENDAGKGKVEIALRIKGAAKGAPGIPTGPIVFDDVTESSAEFSWKAPENNGGCEITGYNVERKESKNKGWKQCGKTKELKFKADGLEEGTDYDVKVSAVNTMGTGSALEGKITTLKKKEETGKQKSEKSESDEKKSESDKVSELKQIGKPEYVSSTATSIALKWTSDNDEVTYTVQMKEANSKRPWAVVAKEISECSATIAQLKEGTSYLFRVIAQNKTGQTVTSEQSESIECKDTTESKKPAFTNAPTDLTAVKNGKTKITAEFTGHPAPEIHWFKNKKEIFSGKRQWIENIAGATSLTIGEMREDDEGEYKIVVKNTAGSVEHSCKLTMDQLPEINRVDRYASTLVFDKGETVKLRLSFSGRPQPEVIWIDNNGKVIEESRKMKIEKTVLNTVLTINSIDSQDQGEFALKIKNRCGEDKYAIGIQVTDRPAAPGKPAVEDQNVDSVRLRWAAPTNDGGSPVRNYTVEMCTEKGKTWTKAEVTKQAFITLFNLVPGESYRFRVRADNTFGQSEPSDESELVVVKNVSRVVEEPKKKEVKVKEQESVDYERVAKDSEPSEYKTIDIHRLPNDLQAKYIIHEELGKGAYGTVYRATEKATGKTWAAKMVQVRPGVKKENVIHEISMMNQLHHEKLLNLHEAFDMGNEMWLIEEFVSGGELFEKILEDDSLMSEEEVRDYMHQILLGVSHMHKNQIVHLDLKPENILLKAKNSNELKIIDFGLARKLDPKKSVKLLFGTPEFCAPEVVNYQPVGLSTDMWTVGVISYVLLSGLSPFLGDSDEDTLANVSASDWDFDDPSWDDVSDLAKDFICRLMIKDKRKRMSVQDALRHPWITGPLLSAFNDLSEYVKKMQPKLDKSGVPARQKRNFLSLKRWSDDLLPIGRLAKRGAIFRRLTMDGVFERNIAFDTDAAPSVKKQLEDIVANVGDLIATLSCDVDGVPSPKVQWYKDDKELTVPSMKYDSFYNEGLAELTVKNIVESDAGKYTCRATNDLGSIMTHAKLSVKADEKKKKKSKTSPAVIEKKKDRKTSKVVVIEEMIDMPPNFHHLLQDDEAKIGEPKILVVTNTTLPEPTVDWYHNGEHISINDSNYLRKHDKGRYELHILSVDSTDEGKWKAVGKNAFGECESEAKLTVVIPDGQYAPSFGKQLSDVKCSESDILKLEVNIQANPAPEINWFRNESEIEHSQHHRLQFDDGSGNYSLTIIDAYAEDSGEYKCVAKNKIGKAHTVCCVRIEELLSKRSKKIDGSKAPRFRMQLPTPREVPQGADLTLVCSVSGTPHPNIKWTKDDKPIDMSNKQVRHENGVCTLHIIGARDDDQGRYVCEAENIHGVAQSFSVVEIKEAVDKDHVRPKFLEPLVNCSTCEGNEMVLECCVTGKPIPTITWYKDGLKLIIENRMLQYTDRKGVSRLNIMNVVMNDDGEYTCEAVNSLGKDFTHCTVKVVDMGLSKTRLTPVRSRSRSRSRSPSVVGGEIQRPPVVTRPLADATVTEGNRELLEVEVDGFPTPTIEWYHDGKLVAESRTLRTYFDGRVAFLKIYEAHEEHNGQYVCKVSNKLGAVETRAIVVVEAPDAAEHVTQMPTFVKKLQDVVLKTAGETATFTCQSYANPAAQVVWLHNGKALQQTKSNYKTRLFDDNTATLVIENVTDELCGTYTAVANNQFGDVHTSAQLTISGSEAKKIAASLPYFIIELKPKINVVEGATLSIQADLNGSPIPEVVWLKDNSELVESDRIQMKCDGVNYQLLVRDVGLEDEGTYTITAENEKGKIRQNTEVSVTKSKEVKEKKEKKKVEKKDEGKKKPGRPGLPRPSGASKTEQVTMAFDAPSEGPADSYEVERRCPDQREWVSCGSTKSLELEIKGLTPNTEYIFRVAGKNKQGLGEWSEMTSTLKTASVGQAPQFTISPQSKIIANRDDEFEIAVEFSGTPTPSVKWYKENLQIVPDEKIDVATTSTSSILNLKSQEENGTFNCLIENELGQASASCQVTIFNKPASLQSTPDHSLERNLVPTLQKALNNESAQAGQQIMLTCRISSRSESTVAWFKDDERIESAGRYELSSDKKSNHKLVCHAVQSQDTGKYRCVVTNKYGYAESECNVAVEDVTKFIAPSFSATLSDSTAILGHNITLECKVEGSPAPEVSWTKDGERISTTRRIRQTQDENGNCKLSISKAESDDMGVYVCSATSVAGVDSTSSMVMIAKTTGTDSHLVIAQTADEKHEKPRFTRAPPSLIEVNESGQFTLIAKAVGEPKPTVTWLKDGREILRTNRIYHHFVTGDGESHLIAECVVSKTSGIFSCKAENPNGTVIAETQVIVQRMKPANQLANVAPKFTIPLTDMGIVNGHPTTLSCNVTGSPEPTLEWIYIDDSGHKINLTSSTTDWTECRFGKVAELKSERVLREQRGTYQCIATNSSGQATTQCYLLVGELSDEPAGPPRFVKCLQDTWTPLKESIEFSVELAGFPTPDLTWYHNEKKINEGKDVKITFPSDTTSVLSIKNVSLASLGMYFVEASNIHGVLRTAGRLNVSDERRKAEPPQFKHVLEPVLAVQPKVAFSEEHPRASSSAATARVKKGAAPMFLQGLEDMDLKAGASAAVAGKLGRKLRPHRSTTNDADKLAKALAQSLRLDEPRASIDSRPESAANAALDEVRAAINSRNKRVCRPKFMVKPKPRKVLEEYKSLRLKTAISGNPMPQVHWDKEGIILETGNKYSIYNDGDFYYLEVHHVSTFDKGFYNCTAANNEGIITCTSEIDVLPNKEDSAAQVAKRKSRKEAKAPNFIEVLPGRSQANLNESLCVECSVSAYPCASIIWTRNSVRLLPQADRYTMSYDGECASLKFISVTPGDEGTYACEAVNELGSAVTNMNLQVSGVDPNAAEGIPPLFRFEKIKSVRKVVDGSRVELAAELVQASEPLQIRWLRNKVTIVDSPSFSYSRSENMVFLTIADVFPEDGGEYTVEAKNQSGIARCTMQLDVRNNERSVADEAPRVFDFEPTTRSDPGVSVELRAKVIGHPDPVISWTKAGQKLNNEEKYMMRNEGDKFILRIANVTRADAGKYELTAINPSGQANAELELTVVQSTKTVGAKPKFNESPISVQTCEKNRAELRASFSGTPAPACRWFYNGNELIDGLDGYTITSSDTNSSLLINSVDKKHFGEYLCTIRNQNGEELANAMILSEVLSMFYSSLFLVVFVDIVAQCHVARLLHFLNEERFVGRNIFA</sequence>
<protein>
    <recommendedName>
        <fullName evidence="11">Titin homolog</fullName>
        <ecNumber evidence="7 9">2.7.11.1</ecNumber>
    </recommendedName>
</protein>
<gene>
    <name evidence="27" type="primary">ttn-1</name>
    <name evidence="27" type="ORF">W06H8.8</name>
</gene>
<evidence type="ECO:0000250" key="1">
    <source>
        <dbReference type="UniProtKB" id="Q9I7U4"/>
    </source>
</evidence>
<evidence type="ECO:0000255" key="2"/>
<evidence type="ECO:0000255" key="3">
    <source>
        <dbReference type="PROSITE-ProRule" id="PRU00114"/>
    </source>
</evidence>
<evidence type="ECO:0000255" key="4">
    <source>
        <dbReference type="PROSITE-ProRule" id="PRU00159"/>
    </source>
</evidence>
<evidence type="ECO:0000255" key="5">
    <source>
        <dbReference type="PROSITE-ProRule" id="PRU00316"/>
    </source>
</evidence>
<evidence type="ECO:0000256" key="6">
    <source>
        <dbReference type="SAM" id="MobiDB-lite"/>
    </source>
</evidence>
<evidence type="ECO:0000269" key="7">
    <source>
    </source>
</evidence>
<evidence type="ECO:0000269" key="8">
    <source>
    </source>
</evidence>
<evidence type="ECO:0000269" key="9">
    <source>
    </source>
</evidence>
<evidence type="ECO:0000269" key="10">
    <source>
    </source>
</evidence>
<evidence type="ECO:0000303" key="11">
    <source>
    </source>
</evidence>
<evidence type="ECO:0000303" key="12">
    <source>
    </source>
</evidence>
<evidence type="ECO:0000303" key="13">
    <source>
    </source>
</evidence>
<evidence type="ECO:0000305" key="14"/>
<evidence type="ECO:0000305" key="15">
    <source>
    </source>
</evidence>
<evidence type="ECO:0000305" key="16">
    <source>
    </source>
</evidence>
<evidence type="ECO:0000312" key="17">
    <source>
        <dbReference type="EMBL" id="AAN61517.1"/>
    </source>
</evidence>
<evidence type="ECO:0000312" key="18">
    <source>
        <dbReference type="EMBL" id="AAN61520.1"/>
    </source>
</evidence>
<evidence type="ECO:0000312" key="19">
    <source>
        <dbReference type="EMBL" id="AAN61521.1"/>
    </source>
</evidence>
<evidence type="ECO:0000312" key="20">
    <source>
        <dbReference type="Proteomes" id="UP000001940"/>
    </source>
</evidence>
<evidence type="ECO:0000312" key="21">
    <source>
        <dbReference type="WormBase" id="W06H8.8a"/>
    </source>
</evidence>
<evidence type="ECO:0000312" key="22">
    <source>
        <dbReference type="WormBase" id="W06H8.8b"/>
    </source>
</evidence>
<evidence type="ECO:0000312" key="23">
    <source>
        <dbReference type="WormBase" id="W06H8.8c"/>
    </source>
</evidence>
<evidence type="ECO:0000312" key="24">
    <source>
        <dbReference type="WormBase" id="W06H8.8d"/>
    </source>
</evidence>
<evidence type="ECO:0000312" key="25">
    <source>
        <dbReference type="WormBase" id="W06H8.8e"/>
    </source>
</evidence>
<evidence type="ECO:0000312" key="26">
    <source>
        <dbReference type="WormBase" id="W06H8.8f"/>
    </source>
</evidence>
<evidence type="ECO:0000312" key="27">
    <source>
        <dbReference type="WormBase" id="W06H8.8g"/>
    </source>
</evidence>
<accession>G4SLH0</accession>
<accession>A7DT28</accession>
<accession>G4SLD6</accession>
<accession>G5EDP1</accession>
<accession>G5EDT5</accession>
<accession>G5EF69</accession>
<accession>G5EFF0</accession>
<accession>Q65XY2</accession>
<accession>Q8ISF3</accession>
<accession>Q8ISF4</accession>
<comment type="function">
    <text evidence="1 9 10">Serine/threonine-protein kinase (PubMed:18390597, PubMed:20346955). Key component in the assembly and functioning of muscles. By providing connections at the level of individual microfilaments, it contributes to the fine balance of forces between the two halves of the sarcomere. The size and extensibility of the cross-links are the main determinants of sarcomere extensibility properties of muscle. In non-muscle cells, seems to play a role in chromosome condensation and chromosome segregation during mitosis. Might link the lamina network to chromatin or nuclear actin, or both during interphase (By similarity).</text>
</comment>
<comment type="catalytic activity">
    <reaction evidence="7 9">
        <text>L-seryl-[protein] + ATP = O-phospho-L-seryl-[protein] + ADP + H(+)</text>
        <dbReference type="Rhea" id="RHEA:17989"/>
        <dbReference type="Rhea" id="RHEA-COMP:9863"/>
        <dbReference type="Rhea" id="RHEA-COMP:11604"/>
        <dbReference type="ChEBI" id="CHEBI:15378"/>
        <dbReference type="ChEBI" id="CHEBI:29999"/>
        <dbReference type="ChEBI" id="CHEBI:30616"/>
        <dbReference type="ChEBI" id="CHEBI:83421"/>
        <dbReference type="ChEBI" id="CHEBI:456216"/>
        <dbReference type="EC" id="2.7.11.1"/>
    </reaction>
</comment>
<comment type="catalytic activity">
    <reaction evidence="7 9">
        <text>L-threonyl-[protein] + ATP = O-phospho-L-threonyl-[protein] + ADP + H(+)</text>
        <dbReference type="Rhea" id="RHEA:46608"/>
        <dbReference type="Rhea" id="RHEA-COMP:11060"/>
        <dbReference type="Rhea" id="RHEA-COMP:11605"/>
        <dbReference type="ChEBI" id="CHEBI:15378"/>
        <dbReference type="ChEBI" id="CHEBI:30013"/>
        <dbReference type="ChEBI" id="CHEBI:30616"/>
        <dbReference type="ChEBI" id="CHEBI:61977"/>
        <dbReference type="ChEBI" id="CHEBI:456216"/>
        <dbReference type="EC" id="2.7.11.1"/>
    </reaction>
</comment>
<comment type="cofactor">
    <cofactor evidence="9">
        <name>Mg(2+)</name>
        <dbReference type="ChEBI" id="CHEBI:18420"/>
    </cofactor>
</comment>
<comment type="subunit">
    <text evidence="10">Interacts (via C-terminus) with myosin. Interacts with actin.</text>
</comment>
<comment type="subcellular location">
    <subcellularLocation>
        <location evidence="10">Cytoplasm</location>
        <location evidence="10">Myofibril</location>
        <location evidence="10">Sarcomere</location>
        <location evidence="10">A band</location>
    </subcellularLocation>
    <subcellularLocation>
        <location evidence="10">Cytoplasm</location>
        <location evidence="10">Myofibril</location>
        <location evidence="10">Sarcomere</location>
        <location evidence="10">I band</location>
    </subcellularLocation>
    <subcellularLocation>
        <location evidence="8">Nucleus membrane</location>
        <topology evidence="8">Peripheral membrane protein</topology>
    </subcellularLocation>
    <text evidence="8 10">Localizes throughout the I-band except for dense bodies and in the outer edge of the A-band (PubMed:20346955). In embryo, co-localizes with lamin lmn-1 at the nuclear membrane. The localization to the nuclear envelope is lmn-1-dependent (PubMed:16410549).</text>
</comment>
<comment type="alternative products">
    <event type="alternative promoter"/>
    <event type="alternative splicing"/>
    <isoform>
        <id>G4SLH0-1</id>
        <name evidence="27">g</name>
        <sequence type="displayed"/>
    </isoform>
    <isoform>
        <id>G4SLH0-2</id>
        <name evidence="25">e</name>
        <sequence type="described" ref="VSP_058056 VSP_058057"/>
    </isoform>
    <isoform>
        <id>G4SLH0-3</id>
        <name evidence="26">f</name>
        <sequence type="described" ref="VSP_058055 VSP_058056 VSP_058057"/>
    </isoform>
    <isoform>
        <id>G4SLH0-4</id>
        <name evidence="24">d</name>
        <sequence type="described" ref="VSP_058052 VSP_058053 VSP_058054"/>
    </isoform>
    <isoform>
        <id>G4SLH0-5</id>
        <name evidence="23">c</name>
        <sequence type="described" ref="VSP_058050 VSP_058051"/>
    </isoform>
    <isoform>
        <id>G4SLH0-6</id>
        <name evidence="21">a</name>
        <sequence type="described" ref="VSP_058046 VSP_058047 VSP_058048 VSP_058049"/>
    </isoform>
    <isoform>
        <id>G4SLH0-7</id>
        <name evidence="22">b</name>
        <sequence type="described" ref="VSP_058047 VSP_058048 VSP_058049"/>
    </isoform>
    <isoform>
        <id>G4SLH0-8</id>
        <name evidence="18">h</name>
        <name evidence="11">301kDa_1</name>
        <sequence type="described" ref="VSP_058045 VSP_058056 VSP_058057"/>
    </isoform>
    <isoform>
        <id>G4SLH0-9</id>
        <name evidence="19">i</name>
        <name evidence="11">301kDa_1</name>
        <sequence type="described" ref="VSP_058045 VSP_058055 VSP_058056 VSP_058057"/>
    </isoform>
</comment>
<comment type="tissue specificity">
    <text evidence="7 8 10">Expression is restricted to body wall, enteric and vulval muscles.</text>
</comment>
<comment type="developmental stage">
    <text evidence="7">Expression begins at 2.5-fold stage and continues throughout adulthood.</text>
</comment>
<comment type="domain">
    <text evidence="13">The PEVK region may serve as an entropic spring to bear the passive tension of the sarcomere.</text>
</comment>
<comment type="domain">
    <text evidence="13">The BLUE region may serve as a force and thermal sensors.</text>
</comment>
<comment type="domain">
    <text evidence="12">The autoinhibitory domain may interact with the kinase catalytic core thereby preventing its activation.</text>
</comment>
<comment type="miscellaneous">
    <molecule>Isoform e</molecule>
    <text evidence="14">Produced by alternative splicing of isoform g.</text>
</comment>
<comment type="miscellaneous">
    <molecule>Isoform f</molecule>
    <text evidence="14">Produced by alternative splicing of isoform g.</text>
</comment>
<comment type="miscellaneous">
    <molecule>Isoform d</molecule>
    <text evidence="14">Produced by alternative splicing of isoform g.</text>
</comment>
<comment type="miscellaneous">
    <molecule>Isoform c</molecule>
    <text evidence="14">Produced by alternative splicing of isoform g.</text>
</comment>
<comment type="miscellaneous">
    <molecule>Isoform a</molecule>
    <text evidence="14">Produced by alternative splicing of isoform g.</text>
</comment>
<comment type="miscellaneous">
    <molecule>Isoform b</molecule>
    <text evidence="14">Produced by alternative splicing of isoform g.</text>
</comment>
<comment type="miscellaneous">
    <molecule>Isoform h</molecule>
    <text evidence="14">Produced by alternative promoter usage.</text>
</comment>
<comment type="miscellaneous">
    <molecule>Isoform i</molecule>
    <text evidence="14">Produced by alternative promoter usage and alternative splicing of isoform 301kDa_1.</text>
</comment>
<comment type="similarity">
    <text evidence="14">Belongs to the protein kinase superfamily. CAMK Ser/Thr protein kinase family.</text>
</comment>
<dbReference type="EC" id="2.7.11.1" evidence="7 9"/>
<dbReference type="EMBL" id="AY130758">
    <property type="protein sequence ID" value="AAN61517.1"/>
    <property type="molecule type" value="Genomic_DNA"/>
</dbReference>
<dbReference type="EMBL" id="AY130758">
    <property type="protein sequence ID" value="AAN61518.1"/>
    <property type="molecule type" value="Genomic_DNA"/>
</dbReference>
<dbReference type="EMBL" id="AY130758">
    <property type="protein sequence ID" value="AAN61519.1"/>
    <property type="molecule type" value="Genomic_DNA"/>
</dbReference>
<dbReference type="EMBL" id="AY130758">
    <property type="protein sequence ID" value="AAN61520.1"/>
    <property type="molecule type" value="Genomic_DNA"/>
</dbReference>
<dbReference type="EMBL" id="AY130758">
    <property type="protein sequence ID" value="AAN61521.1"/>
    <property type="molecule type" value="Genomic_DNA"/>
</dbReference>
<dbReference type="EMBL" id="BX284605">
    <property type="protein sequence ID" value="CCD72168.1"/>
    <property type="molecule type" value="Genomic_DNA"/>
</dbReference>
<dbReference type="EMBL" id="BX284605">
    <property type="protein sequence ID" value="CCD72169.1"/>
    <property type="molecule type" value="Genomic_DNA"/>
</dbReference>
<dbReference type="EMBL" id="BX284605">
    <property type="protein sequence ID" value="CCD72170.1"/>
    <property type="molecule type" value="Genomic_DNA"/>
</dbReference>
<dbReference type="EMBL" id="BX284605">
    <property type="protein sequence ID" value="CCD72171.1"/>
    <property type="molecule type" value="Genomic_DNA"/>
</dbReference>
<dbReference type="EMBL" id="BX284605">
    <property type="protein sequence ID" value="CCD72172.1"/>
    <property type="molecule type" value="Genomic_DNA"/>
</dbReference>
<dbReference type="EMBL" id="BX284605">
    <property type="protein sequence ID" value="CCD72173.1"/>
    <property type="molecule type" value="Genomic_DNA"/>
</dbReference>
<dbReference type="EMBL" id="BX284605">
    <property type="protein sequence ID" value="CCD72174.1"/>
    <property type="molecule type" value="Genomic_DNA"/>
</dbReference>
<dbReference type="PIR" id="E89066">
    <property type="entry name" value="E89066"/>
</dbReference>
<dbReference type="PIR" id="T33247">
    <property type="entry name" value="T33247"/>
</dbReference>
<dbReference type="RefSeq" id="NP_001024198.1">
    <property type="nucleotide sequence ID" value="NM_001029027.3"/>
</dbReference>
<dbReference type="RefSeq" id="NP_001024199.1">
    <property type="nucleotide sequence ID" value="NM_001029028.3"/>
</dbReference>
<dbReference type="RefSeq" id="NP_001024200.1">
    <molecule id="G4SLH0-5"/>
    <property type="nucleotide sequence ID" value="NM_001029029.5"/>
</dbReference>
<dbReference type="RefSeq" id="NP_001024201.1">
    <property type="nucleotide sequence ID" value="NM_001029030.3"/>
</dbReference>
<dbReference type="RefSeq" id="NP_001024202.1">
    <property type="nucleotide sequence ID" value="NM_001029031.4"/>
</dbReference>
<dbReference type="RefSeq" id="NP_001024203.1">
    <property type="nucleotide sequence ID" value="NM_001029032.3"/>
</dbReference>
<dbReference type="RefSeq" id="NP_001024204.1">
    <property type="nucleotide sequence ID" value="NM_001029033.3"/>
</dbReference>
<dbReference type="FunCoup" id="G4SLH0">
    <property type="interactions" value="13"/>
</dbReference>
<dbReference type="IntAct" id="G4SLH0">
    <property type="interactions" value="1"/>
</dbReference>
<dbReference type="STRING" id="6239.W06H8.8f.1"/>
<dbReference type="PaxDb" id="6239-W06H8.8g"/>
<dbReference type="PeptideAtlas" id="G4SLH0"/>
<dbReference type="EnsemblMetazoa" id="W06H8.8a.1">
    <property type="protein sequence ID" value="W06H8.8a.1"/>
    <property type="gene ID" value="WBGene00006436"/>
</dbReference>
<dbReference type="EnsemblMetazoa" id="W06H8.8a.2">
    <property type="protein sequence ID" value="W06H8.8a.2"/>
    <property type="gene ID" value="WBGene00006436"/>
</dbReference>
<dbReference type="EnsemblMetazoa" id="W06H8.8b.1">
    <property type="protein sequence ID" value="W06H8.8b.1"/>
    <property type="gene ID" value="WBGene00006436"/>
</dbReference>
<dbReference type="EnsemblMetazoa" id="W06H8.8c.1">
    <molecule id="G4SLH0-5"/>
    <property type="protein sequence ID" value="W06H8.8c.1"/>
    <property type="gene ID" value="WBGene00006436"/>
</dbReference>
<dbReference type="EnsemblMetazoa" id="W06H8.8d.1">
    <property type="protein sequence ID" value="W06H8.8d.1"/>
    <property type="gene ID" value="WBGene00006436"/>
</dbReference>
<dbReference type="EnsemblMetazoa" id="W06H8.8e.1">
    <property type="protein sequence ID" value="W06H8.8e.1"/>
    <property type="gene ID" value="WBGene00006436"/>
</dbReference>
<dbReference type="EnsemblMetazoa" id="W06H8.8f.1">
    <property type="protein sequence ID" value="W06H8.8f.1"/>
    <property type="gene ID" value="WBGene00006436"/>
</dbReference>
<dbReference type="EnsemblMetazoa" id="W06H8.8g.1">
    <property type="protein sequence ID" value="W06H8.8g.1"/>
    <property type="gene ID" value="WBGene00006436"/>
</dbReference>
<dbReference type="GeneID" id="266969"/>
<dbReference type="KEGG" id="cel:CELE_W06H8.8"/>
<dbReference type="UCSC" id="W06H8.8e.2">
    <property type="organism name" value="c. elegans"/>
</dbReference>
<dbReference type="AGR" id="WB:WBGene00006436"/>
<dbReference type="CTD" id="266969"/>
<dbReference type="WormBase" id="W06H8.8a">
    <molecule id="G4SLH0-6"/>
    <property type="protein sequence ID" value="CE52437"/>
    <property type="gene ID" value="WBGene00006436"/>
    <property type="gene designation" value="ttn-1"/>
</dbReference>
<dbReference type="WormBase" id="W06H8.8b">
    <molecule id="G4SLH0-7"/>
    <property type="protein sequence ID" value="CE52423"/>
    <property type="gene ID" value="WBGene00006436"/>
    <property type="gene designation" value="ttn-1"/>
</dbReference>
<dbReference type="WormBase" id="W06H8.8c">
    <molecule id="G4SLH0-5"/>
    <property type="protein sequence ID" value="CE36723"/>
    <property type="gene ID" value="WBGene00006436"/>
    <property type="gene designation" value="ttn-1"/>
</dbReference>
<dbReference type="WormBase" id="W06H8.8d">
    <molecule id="G4SLH0-4"/>
    <property type="protein sequence ID" value="CE52449"/>
    <property type="gene ID" value="WBGene00006436"/>
    <property type="gene designation" value="ttn-1"/>
</dbReference>
<dbReference type="WormBase" id="W06H8.8e">
    <molecule id="G4SLH0-2"/>
    <property type="protein sequence ID" value="CE52441"/>
    <property type="gene ID" value="WBGene00006436"/>
    <property type="gene designation" value="ttn-1"/>
</dbReference>
<dbReference type="WormBase" id="W06H8.8f">
    <molecule id="G4SLH0-3"/>
    <property type="protein sequence ID" value="CE52428"/>
    <property type="gene ID" value="WBGene00006436"/>
    <property type="gene designation" value="ttn-1"/>
</dbReference>
<dbReference type="WormBase" id="W06H8.8g">
    <molecule id="G4SLH0-1"/>
    <property type="protein sequence ID" value="CE52417"/>
    <property type="gene ID" value="WBGene00006436"/>
    <property type="gene designation" value="ttn-1"/>
</dbReference>
<dbReference type="eggNOG" id="KOG0613">
    <property type="taxonomic scope" value="Eukaryota"/>
</dbReference>
<dbReference type="eggNOG" id="KOG4475">
    <property type="taxonomic scope" value="Eukaryota"/>
</dbReference>
<dbReference type="GeneTree" id="ENSGT00940000163812"/>
<dbReference type="InParanoid" id="G4SLH0"/>
<dbReference type="OMA" id="QVEYKTE"/>
<dbReference type="OrthoDB" id="5969272at2759"/>
<dbReference type="Reactome" id="R-CEL-1474228">
    <property type="pathway name" value="Degradation of the extracellular matrix"/>
</dbReference>
<dbReference type="Reactome" id="R-CEL-1971475">
    <property type="pathway name" value="A tetrasaccharide linker sequence is required for GAG synthesis"/>
</dbReference>
<dbReference type="Reactome" id="R-CEL-2022928">
    <property type="pathway name" value="HS-GAG biosynthesis"/>
</dbReference>
<dbReference type="Reactome" id="R-CEL-2024096">
    <property type="pathway name" value="HS-GAG degradation"/>
</dbReference>
<dbReference type="Reactome" id="R-CEL-216083">
    <property type="pathway name" value="Integrin cell surface interactions"/>
</dbReference>
<dbReference type="Reactome" id="R-CEL-3000157">
    <property type="pathway name" value="Laminin interactions"/>
</dbReference>
<dbReference type="Reactome" id="R-CEL-3000171">
    <property type="pathway name" value="Non-integrin membrane-ECM interactions"/>
</dbReference>
<dbReference type="Reactome" id="R-CEL-3000178">
    <property type="pathway name" value="ECM proteoglycans"/>
</dbReference>
<dbReference type="Reactome" id="R-CEL-9913351">
    <property type="pathway name" value="Formation of the dystrophin-glycoprotein complex (DGC)"/>
</dbReference>
<dbReference type="PRO" id="PR:G4SLH0"/>
<dbReference type="Proteomes" id="UP000001940">
    <property type="component" value="Chromosome V"/>
</dbReference>
<dbReference type="Bgee" id="WBGene00006436">
    <property type="expression patterns" value="Expressed in pharyngeal muscle cell (C elegans) and 3 other cell types or tissues"/>
</dbReference>
<dbReference type="ExpressionAtlas" id="G4SLH0">
    <property type="expression patterns" value="baseline and differential"/>
</dbReference>
<dbReference type="GO" id="GO:0031672">
    <property type="term" value="C:A band"/>
    <property type="evidence" value="ECO:0000314"/>
    <property type="project" value="WormBase"/>
</dbReference>
<dbReference type="GO" id="GO:0031674">
    <property type="term" value="C:I band"/>
    <property type="evidence" value="ECO:0000314"/>
    <property type="project" value="WormBase"/>
</dbReference>
<dbReference type="GO" id="GO:0043005">
    <property type="term" value="C:neuron projection"/>
    <property type="evidence" value="ECO:0000318"/>
    <property type="project" value="GO_Central"/>
</dbReference>
<dbReference type="GO" id="GO:0031965">
    <property type="term" value="C:nuclear membrane"/>
    <property type="evidence" value="ECO:0007669"/>
    <property type="project" value="UniProtKB-SubCell"/>
</dbReference>
<dbReference type="GO" id="GO:0051015">
    <property type="term" value="F:actin filament binding"/>
    <property type="evidence" value="ECO:0000353"/>
    <property type="project" value="CAFA"/>
</dbReference>
<dbReference type="GO" id="GO:0005524">
    <property type="term" value="F:ATP binding"/>
    <property type="evidence" value="ECO:0007669"/>
    <property type="project" value="UniProtKB-KW"/>
</dbReference>
<dbReference type="GO" id="GO:0046872">
    <property type="term" value="F:metal ion binding"/>
    <property type="evidence" value="ECO:0007669"/>
    <property type="project" value="UniProtKB-KW"/>
</dbReference>
<dbReference type="GO" id="GO:0017022">
    <property type="term" value="F:myosin binding"/>
    <property type="evidence" value="ECO:0000315"/>
    <property type="project" value="CAFA"/>
</dbReference>
<dbReference type="GO" id="GO:0106310">
    <property type="term" value="F:protein serine kinase activity"/>
    <property type="evidence" value="ECO:0007669"/>
    <property type="project" value="RHEA"/>
</dbReference>
<dbReference type="GO" id="GO:0004674">
    <property type="term" value="F:protein serine/threonine kinase activity"/>
    <property type="evidence" value="ECO:0007669"/>
    <property type="project" value="UniProtKB-KW"/>
</dbReference>
<dbReference type="CDD" id="cd00063">
    <property type="entry name" value="FN3"/>
    <property type="match status" value="11"/>
</dbReference>
<dbReference type="CDD" id="cd00096">
    <property type="entry name" value="Ig"/>
    <property type="match status" value="10"/>
</dbReference>
<dbReference type="FunFam" id="2.60.40.10:FF:000345">
    <property type="entry name" value="Muscle M-line assembly protein unc-89"/>
    <property type="match status" value="1"/>
</dbReference>
<dbReference type="FunFam" id="2.60.40.10:FF:000080">
    <property type="entry name" value="Myosin light chain kinase, smooth muscle"/>
    <property type="match status" value="1"/>
</dbReference>
<dbReference type="FunFam" id="2.60.40.10:FF:000107">
    <property type="entry name" value="Myosin, light chain kinase a"/>
    <property type="match status" value="1"/>
</dbReference>
<dbReference type="FunFam" id="2.60.40.10:FF:000031">
    <property type="entry name" value="Myosin-binding protein C, slow type"/>
    <property type="match status" value="1"/>
</dbReference>
<dbReference type="FunFam" id="2.60.40.10:FF:000211">
    <property type="entry name" value="Obscurin-like protein 1"/>
    <property type="match status" value="1"/>
</dbReference>
<dbReference type="FunFam" id="2.60.40.10:FF:000032">
    <property type="entry name" value="palladin isoform X1"/>
    <property type="match status" value="3"/>
</dbReference>
<dbReference type="FunFam" id="1.10.510.10:FF:000135">
    <property type="entry name" value="Putative myosin light chain kinase 3"/>
    <property type="match status" value="1"/>
</dbReference>
<dbReference type="FunFam" id="2.60.40.10:FF:001847">
    <property type="entry name" value="Titin homolog"/>
    <property type="match status" value="1"/>
</dbReference>
<dbReference type="FunFam" id="2.60.40.10:FF:001948">
    <property type="entry name" value="Titin homolog"/>
    <property type="match status" value="1"/>
</dbReference>
<dbReference type="FunFam" id="2.60.40.10:FF:001981">
    <property type="entry name" value="Titin homolog"/>
    <property type="match status" value="1"/>
</dbReference>
<dbReference type="FunFam" id="2.60.40.10:FF:001982">
    <property type="entry name" value="Titin homolog"/>
    <property type="match status" value="1"/>
</dbReference>
<dbReference type="FunFam" id="2.60.40.10:FF:001983">
    <property type="entry name" value="Titin homolog"/>
    <property type="match status" value="1"/>
</dbReference>
<dbReference type="FunFam" id="2.60.40.10:FF:001986">
    <property type="entry name" value="Titin homolog"/>
    <property type="match status" value="1"/>
</dbReference>
<dbReference type="FunFam" id="2.60.40.10:FF:002079">
    <property type="entry name" value="Titin homolog"/>
    <property type="match status" value="1"/>
</dbReference>
<dbReference type="FunFam" id="2.60.40.10:FF:002080">
    <property type="entry name" value="Titin homolog"/>
    <property type="match status" value="1"/>
</dbReference>
<dbReference type="FunFam" id="2.60.40.10:FF:002081">
    <property type="entry name" value="Titin homolog"/>
    <property type="match status" value="1"/>
</dbReference>
<dbReference type="FunFam" id="2.60.40.10:FF:002116">
    <property type="entry name" value="Titin homolog"/>
    <property type="match status" value="1"/>
</dbReference>
<dbReference type="FunFam" id="2.60.40.10:FF:002182">
    <property type="entry name" value="Titin homolog"/>
    <property type="match status" value="1"/>
</dbReference>
<dbReference type="FunFam" id="2.60.40.10:FF:002241">
    <property type="entry name" value="Titin homolog"/>
    <property type="match status" value="1"/>
</dbReference>
<dbReference type="FunFam" id="2.60.40.10:FF:002282">
    <property type="entry name" value="Titin homolog"/>
    <property type="match status" value="1"/>
</dbReference>
<dbReference type="FunFam" id="2.60.40.10:FF:002302">
    <property type="entry name" value="Titin homolog"/>
    <property type="match status" value="1"/>
</dbReference>
<dbReference type="FunFam" id="2.60.40.10:FF:002361">
    <property type="entry name" value="Titin homolog"/>
    <property type="match status" value="1"/>
</dbReference>
<dbReference type="FunFam" id="2.60.40.10:FF:002438">
    <property type="entry name" value="Titin homolog"/>
    <property type="match status" value="1"/>
</dbReference>
<dbReference type="FunFam" id="2.60.40.10:FF:002446">
    <property type="entry name" value="Titin homolog"/>
    <property type="match status" value="1"/>
</dbReference>
<dbReference type="FunFam" id="2.60.40.10:FF:002519">
    <property type="entry name" value="Titin homolog"/>
    <property type="match status" value="1"/>
</dbReference>
<dbReference type="FunFam" id="2.60.40.10:FF:002533">
    <property type="entry name" value="Titin homolog"/>
    <property type="match status" value="1"/>
</dbReference>
<dbReference type="FunFam" id="2.60.40.10:FF:002545">
    <property type="entry name" value="Titin homolog"/>
    <property type="match status" value="1"/>
</dbReference>
<dbReference type="FunFam" id="2.60.40.10:FF:002550">
    <property type="entry name" value="Titin homolog"/>
    <property type="match status" value="1"/>
</dbReference>
<dbReference type="FunFam" id="2.60.40.10:FF:002559">
    <property type="entry name" value="Titin homolog"/>
    <property type="match status" value="1"/>
</dbReference>
<dbReference type="FunFam" id="2.60.40.10:FF:002566">
    <property type="entry name" value="Titin homolog"/>
    <property type="match status" value="1"/>
</dbReference>
<dbReference type="FunFam" id="2.60.40.10:FF:002599">
    <property type="entry name" value="Titin homolog"/>
    <property type="match status" value="1"/>
</dbReference>
<dbReference type="FunFam" id="2.60.40.10:FF:002661">
    <property type="entry name" value="Titin homolog"/>
    <property type="match status" value="1"/>
</dbReference>
<dbReference type="FunFam" id="2.60.40.10:FF:002662">
    <property type="entry name" value="Titin homolog"/>
    <property type="match status" value="1"/>
</dbReference>
<dbReference type="FunFam" id="2.60.40.10:FF:002934">
    <property type="entry name" value="Titin homolog"/>
    <property type="match status" value="1"/>
</dbReference>
<dbReference type="FunFam" id="3.30.200.20:FF:000763">
    <property type="entry name" value="Titin homolog"/>
    <property type="match status" value="1"/>
</dbReference>
<dbReference type="Gene3D" id="2.60.40.10">
    <property type="entry name" value="Immunoglobulins"/>
    <property type="match status" value="63"/>
</dbReference>
<dbReference type="Gene3D" id="3.30.200.20">
    <property type="entry name" value="Phosphorylase Kinase, domain 1"/>
    <property type="match status" value="1"/>
</dbReference>
<dbReference type="Gene3D" id="1.10.510.10">
    <property type="entry name" value="Transferase(Phosphotransferase) domain 1"/>
    <property type="match status" value="1"/>
</dbReference>
<dbReference type="InterPro" id="IPR050958">
    <property type="entry name" value="Cell_Adh-Cytoskel_Orgn"/>
</dbReference>
<dbReference type="InterPro" id="IPR003961">
    <property type="entry name" value="FN3_dom"/>
</dbReference>
<dbReference type="InterPro" id="IPR036116">
    <property type="entry name" value="FN3_sf"/>
</dbReference>
<dbReference type="InterPro" id="IPR007110">
    <property type="entry name" value="Ig-like_dom"/>
</dbReference>
<dbReference type="InterPro" id="IPR036179">
    <property type="entry name" value="Ig-like_dom_sf"/>
</dbReference>
<dbReference type="InterPro" id="IPR013783">
    <property type="entry name" value="Ig-like_fold"/>
</dbReference>
<dbReference type="InterPro" id="IPR013098">
    <property type="entry name" value="Ig_I-set"/>
</dbReference>
<dbReference type="InterPro" id="IPR003599">
    <property type="entry name" value="Ig_sub"/>
</dbReference>
<dbReference type="InterPro" id="IPR003598">
    <property type="entry name" value="Ig_sub2"/>
</dbReference>
<dbReference type="InterPro" id="IPR013106">
    <property type="entry name" value="Ig_V-set"/>
</dbReference>
<dbReference type="InterPro" id="IPR011009">
    <property type="entry name" value="Kinase-like_dom_sf"/>
</dbReference>
<dbReference type="InterPro" id="IPR000719">
    <property type="entry name" value="Prot_kinase_dom"/>
</dbReference>
<dbReference type="InterPro" id="IPR017441">
    <property type="entry name" value="Protein_kinase_ATP_BS"/>
</dbReference>
<dbReference type="InterPro" id="IPR008271">
    <property type="entry name" value="Ser/Thr_kinase_AS"/>
</dbReference>
<dbReference type="PANTHER" id="PTHR45080">
    <property type="entry name" value="CONTACTIN 5"/>
    <property type="match status" value="1"/>
</dbReference>
<dbReference type="PANTHER" id="PTHR45080:SF8">
    <property type="entry name" value="IG-LIKE DOMAIN-CONTAINING PROTEIN"/>
    <property type="match status" value="1"/>
</dbReference>
<dbReference type="Pfam" id="PF00041">
    <property type="entry name" value="fn3"/>
    <property type="match status" value="10"/>
</dbReference>
<dbReference type="Pfam" id="PF07679">
    <property type="entry name" value="I-set"/>
    <property type="match status" value="39"/>
</dbReference>
<dbReference type="Pfam" id="PF13927">
    <property type="entry name" value="Ig_3"/>
    <property type="match status" value="1"/>
</dbReference>
<dbReference type="Pfam" id="PF00069">
    <property type="entry name" value="Pkinase"/>
    <property type="match status" value="1"/>
</dbReference>
<dbReference type="SMART" id="SM00060">
    <property type="entry name" value="FN3"/>
    <property type="match status" value="11"/>
</dbReference>
<dbReference type="SMART" id="SM00409">
    <property type="entry name" value="IG"/>
    <property type="match status" value="50"/>
</dbReference>
<dbReference type="SMART" id="SM00408">
    <property type="entry name" value="IGc2"/>
    <property type="match status" value="37"/>
</dbReference>
<dbReference type="SMART" id="SM00406">
    <property type="entry name" value="IGv"/>
    <property type="match status" value="4"/>
</dbReference>
<dbReference type="SMART" id="SM00220">
    <property type="entry name" value="S_TKc"/>
    <property type="match status" value="1"/>
</dbReference>
<dbReference type="SUPFAM" id="SSF49265">
    <property type="entry name" value="Fibronectin type III"/>
    <property type="match status" value="6"/>
</dbReference>
<dbReference type="SUPFAM" id="SSF48726">
    <property type="entry name" value="Immunoglobulin"/>
    <property type="match status" value="50"/>
</dbReference>
<dbReference type="SUPFAM" id="SSF56112">
    <property type="entry name" value="Protein kinase-like (PK-like)"/>
    <property type="match status" value="1"/>
</dbReference>
<dbReference type="PROSITE" id="PS50853">
    <property type="entry name" value="FN3"/>
    <property type="match status" value="11"/>
</dbReference>
<dbReference type="PROSITE" id="PS50835">
    <property type="entry name" value="IG_LIKE"/>
    <property type="match status" value="38"/>
</dbReference>
<dbReference type="PROSITE" id="PS00107">
    <property type="entry name" value="PROTEIN_KINASE_ATP"/>
    <property type="match status" value="1"/>
</dbReference>
<dbReference type="PROSITE" id="PS50011">
    <property type="entry name" value="PROTEIN_KINASE_DOM"/>
    <property type="match status" value="1"/>
</dbReference>
<dbReference type="PROSITE" id="PS00108">
    <property type="entry name" value="PROTEIN_KINASE_ST"/>
    <property type="match status" value="1"/>
</dbReference>
<feature type="chain" id="PRO_0000435370" description="Titin homolog" evidence="14">
    <location>
        <begin position="1"/>
        <end position="18562"/>
    </location>
</feature>
<feature type="domain" description="Ig-like 1" evidence="3">
    <location>
        <begin position="90"/>
        <end position="176"/>
    </location>
</feature>
<feature type="domain" description="Ig-like 2" evidence="3">
    <location>
        <begin position="406"/>
        <end position="493"/>
    </location>
</feature>
<feature type="domain" description="Ig-like 3" evidence="3">
    <location>
        <begin position="821"/>
        <end position="913"/>
    </location>
</feature>
<feature type="domain" description="Ig-like 4" evidence="3">
    <location>
        <begin position="943"/>
        <end position="1038"/>
    </location>
</feature>
<feature type="domain" description="Ig-like 5" evidence="3">
    <location>
        <begin position="1135"/>
        <end position="1225"/>
    </location>
</feature>
<feature type="domain" description="Ig-like 6" evidence="3">
    <location>
        <begin position="1679"/>
        <end position="1762"/>
    </location>
</feature>
<feature type="domain" description="Ig-like 7" evidence="3">
    <location>
        <begin position="3095"/>
        <end position="3177"/>
    </location>
</feature>
<feature type="domain" description="Ig-like 8" evidence="3">
    <location>
        <begin position="3179"/>
        <end position="3264"/>
    </location>
</feature>
<feature type="domain" description="Ig-like 9" evidence="3">
    <location>
        <begin position="3789"/>
        <end position="3878"/>
    </location>
</feature>
<feature type="domain" description="Ig-like 10" evidence="3">
    <location>
        <begin position="3897"/>
        <end position="3985"/>
    </location>
</feature>
<feature type="domain" description="Ig-like 11" evidence="3">
    <location>
        <begin position="4038"/>
        <end position="4125"/>
    </location>
</feature>
<feature type="repeat" description="PVET 1" evidence="15">
    <location>
        <begin position="4599"/>
        <end position="4626"/>
    </location>
</feature>
<feature type="repeat" description="PVET 2" evidence="15">
    <location>
        <begin position="4627"/>
        <end position="4665"/>
    </location>
</feature>
<feature type="repeat" description="PVET 3" evidence="15">
    <location>
        <begin position="4666"/>
        <end position="4704"/>
    </location>
</feature>
<feature type="repeat" description="PVET 4" evidence="15">
    <location>
        <begin position="4755"/>
        <end position="4787"/>
    </location>
</feature>
<feature type="repeat" description="PVET 5" evidence="15">
    <location>
        <begin position="4788"/>
        <end position="4826"/>
    </location>
</feature>
<feature type="repeat" description="PVET 6" evidence="15">
    <location>
        <begin position="4827"/>
        <end position="4865"/>
    </location>
</feature>
<feature type="repeat" description="PVET 7" evidence="15">
    <location>
        <begin position="4917"/>
        <end position="4948"/>
    </location>
</feature>
<feature type="repeat" description="PVET 8" evidence="15">
    <location>
        <begin position="4949"/>
        <end position="4987"/>
    </location>
</feature>
<feature type="repeat" description="PVET 9" evidence="15">
    <location>
        <begin position="4988"/>
        <end position="5026"/>
    </location>
</feature>
<feature type="repeat" description="PVET 10" evidence="15">
    <location>
        <begin position="5027"/>
        <end position="5065"/>
    </location>
</feature>
<feature type="repeat" description="PVET 11" evidence="15">
    <location>
        <begin position="5066"/>
        <end position="5104"/>
    </location>
</feature>
<feature type="repeat" description="PVET 12" evidence="15">
    <location>
        <begin position="5105"/>
        <end position="5143"/>
    </location>
</feature>
<feature type="repeat" description="PVET 13" evidence="15">
    <location>
        <begin position="5144"/>
        <end position="5182"/>
    </location>
</feature>
<feature type="repeat" description="PVET 14" evidence="15">
    <location>
        <begin position="5183"/>
        <end position="5221"/>
    </location>
</feature>
<feature type="repeat" description="PVET 15" evidence="15">
    <location>
        <begin position="5273"/>
        <end position="5304"/>
    </location>
</feature>
<feature type="repeat" description="PVET 16" evidence="15">
    <location>
        <begin position="5305"/>
        <end position="5343"/>
    </location>
</feature>
<feature type="repeat" description="PVET 17" evidence="15">
    <location>
        <begin position="5344"/>
        <end position="5382"/>
    </location>
</feature>
<feature type="repeat" description="PVET 18" evidence="15">
    <location>
        <begin position="5434"/>
        <end position="5465"/>
    </location>
</feature>
<feature type="repeat" description="PVET 19" evidence="15">
    <location>
        <begin position="5466"/>
        <end position="5504"/>
    </location>
</feature>
<feature type="repeat" description="PVET 20" evidence="15">
    <location>
        <begin position="5505"/>
        <end position="5543"/>
    </location>
</feature>
<feature type="repeat" description="PVET 21" evidence="15">
    <location>
        <begin position="5544"/>
        <end position="5582"/>
    </location>
</feature>
<feature type="repeat" description="PVET 22" evidence="15">
    <location>
        <begin position="5583"/>
        <end position="5621"/>
    </location>
</feature>
<feature type="repeat" description="PVET 23" evidence="15">
    <location>
        <begin position="5622"/>
        <end position="5660"/>
    </location>
</feature>
<feature type="repeat" description="PVET 24" evidence="15">
    <location>
        <begin position="5661"/>
        <end position="5699"/>
    </location>
</feature>
<feature type="repeat" description="PVET 25" evidence="15">
    <location>
        <begin position="5700"/>
        <end position="5738"/>
    </location>
</feature>
<feature type="repeat" description="PVET 26" evidence="15">
    <location>
        <begin position="5739"/>
        <end position="5777"/>
    </location>
</feature>
<feature type="repeat" description="PVET 27" evidence="15">
    <location>
        <begin position="5778"/>
        <end position="5816"/>
    </location>
</feature>
<feature type="repeat" description="PVET 28" evidence="15">
    <location>
        <begin position="5817"/>
        <end position="5855"/>
    </location>
</feature>
<feature type="repeat" description="PVET 29" evidence="15">
    <location>
        <begin position="5856"/>
        <end position="5894"/>
    </location>
</feature>
<feature type="repeat" description="PVET 30" evidence="15">
    <location>
        <begin position="5895"/>
        <end position="5933"/>
    </location>
</feature>
<feature type="repeat" description="PVET 31" evidence="15">
    <location>
        <begin position="5934"/>
        <end position="5972"/>
    </location>
</feature>
<feature type="repeat" description="PVET 32" evidence="15">
    <location>
        <begin position="5973"/>
        <end position="6011"/>
    </location>
</feature>
<feature type="repeat" description="PVET 33" evidence="15">
    <location>
        <begin position="6012"/>
        <end position="6050"/>
    </location>
</feature>
<feature type="repeat" description="PVET 34" evidence="15">
    <location>
        <begin position="6051"/>
        <end position="6089"/>
    </location>
</feature>
<feature type="repeat" description="PVET 35" evidence="15">
    <location>
        <begin position="6090"/>
        <end position="6128"/>
    </location>
</feature>
<feature type="repeat" description="PVET 36" evidence="15">
    <location>
        <begin position="6129"/>
        <end position="6167"/>
    </location>
</feature>
<feature type="repeat" description="PVET 37" evidence="15">
    <location>
        <begin position="6219"/>
        <end position="6250"/>
    </location>
</feature>
<feature type="repeat" description="PVET 38" evidence="15">
    <location>
        <begin position="6251"/>
        <end position="6289"/>
    </location>
</feature>
<feature type="repeat" description="PVET 39" evidence="15">
    <location>
        <begin position="6290"/>
        <end position="6328"/>
    </location>
</feature>
<feature type="repeat" description="PVET 40" evidence="15">
    <location>
        <begin position="6329"/>
        <end position="6367"/>
    </location>
</feature>
<feature type="repeat" description="PVET 41" evidence="15">
    <location>
        <begin position="6368"/>
        <end position="6406"/>
    </location>
</feature>
<feature type="repeat" description="PVET 42" evidence="15">
    <location>
        <begin position="6407"/>
        <end position="6445"/>
    </location>
</feature>
<feature type="repeat" description="PVET 43" evidence="15">
    <location>
        <begin position="6446"/>
        <end position="6484"/>
    </location>
</feature>
<feature type="repeat" description="PVET 44" evidence="15">
    <location>
        <begin position="6485"/>
        <end position="6523"/>
    </location>
</feature>
<feature type="repeat" description="PVET 45" evidence="15">
    <location>
        <begin position="6524"/>
        <end position="6562"/>
    </location>
</feature>
<feature type="repeat" description="PVET 46" evidence="15">
    <location>
        <begin position="6563"/>
        <end position="6601"/>
    </location>
</feature>
<feature type="repeat" description="PVET 47" evidence="15">
    <location>
        <begin position="6602"/>
        <end position="6640"/>
    </location>
</feature>
<feature type="repeat" description="PVET 48" evidence="15">
    <location>
        <begin position="6641"/>
        <end position="6679"/>
    </location>
</feature>
<feature type="repeat" description="PVET 49" evidence="15">
    <location>
        <begin position="6680"/>
        <end position="6718"/>
    </location>
</feature>
<feature type="repeat" description="PVET 50" evidence="15">
    <location>
        <begin position="6719"/>
        <end position="6757"/>
    </location>
</feature>
<feature type="repeat" description="PVET 51" evidence="15">
    <location>
        <begin position="6758"/>
        <end position="6796"/>
    </location>
</feature>
<feature type="repeat" description="PVET 52" evidence="15">
    <location>
        <begin position="6797"/>
        <end position="6835"/>
    </location>
</feature>
<feature type="repeat" description="PVET 53" evidence="15">
    <location>
        <begin position="6836"/>
        <end position="6874"/>
    </location>
</feature>
<feature type="repeat" description="PVET 54" evidence="15">
    <location>
        <begin position="6875"/>
        <end position="6913"/>
    </location>
</feature>
<feature type="repeat" description="PVET 55" evidence="15">
    <location>
        <begin position="6914"/>
        <end position="6952"/>
    </location>
</feature>
<feature type="repeat" description="PVET 56" evidence="15">
    <location>
        <begin position="6953"/>
        <end position="6991"/>
    </location>
</feature>
<feature type="repeat" description="BLUE 1" evidence="16">
    <location>
        <begin position="6992"/>
        <end position="6996"/>
    </location>
</feature>
<feature type="repeat" description="BLUE 2" evidence="16">
    <location>
        <begin position="6997"/>
        <end position="7012"/>
    </location>
</feature>
<feature type="repeat" description="BLUE 3" evidence="16">
    <location>
        <begin position="7013"/>
        <end position="7028"/>
    </location>
</feature>
<feature type="repeat" description="BLUE 4" evidence="16">
    <location>
        <begin position="7029"/>
        <end position="7044"/>
    </location>
</feature>
<feature type="repeat" description="BLUE 5" evidence="16">
    <location>
        <begin position="7045"/>
        <end position="7060"/>
    </location>
</feature>
<feature type="repeat" description="BLUE 6" evidence="16">
    <location>
        <begin position="7061"/>
        <end position="7076"/>
    </location>
</feature>
<feature type="repeat" description="BLUE 7" evidence="16">
    <location>
        <begin position="7077"/>
        <end position="7092"/>
    </location>
</feature>
<feature type="repeat" description="BLUE 8" evidence="16">
    <location>
        <begin position="7093"/>
        <end position="7108"/>
    </location>
</feature>
<feature type="repeat" description="BLUE 9" evidence="16">
    <location>
        <begin position="7109"/>
        <end position="7124"/>
    </location>
</feature>
<feature type="repeat" description="BLUE 10" evidence="16">
    <location>
        <begin position="7125"/>
        <end position="7140"/>
    </location>
</feature>
<feature type="repeat" description="BLUE 11" evidence="16">
    <location>
        <begin position="7141"/>
        <end position="7156"/>
    </location>
</feature>
<feature type="repeat" description="BLUE 12" evidence="16">
    <location>
        <begin position="7157"/>
        <end position="7172"/>
    </location>
</feature>
<feature type="repeat" description="BLUE 13" evidence="16">
    <location>
        <begin position="7173"/>
        <end position="7188"/>
    </location>
</feature>
<feature type="repeat" description="BLUE 14" evidence="16">
    <location>
        <begin position="7189"/>
        <end position="7204"/>
    </location>
</feature>
<feature type="repeat" description="BLUE 15" evidence="16">
    <location>
        <begin position="7205"/>
        <end position="7220"/>
    </location>
</feature>
<feature type="repeat" description="BLUE 16" evidence="16">
    <location>
        <begin position="7221"/>
        <end position="7236"/>
    </location>
</feature>
<feature type="repeat" description="BLUE 17" evidence="16">
    <location>
        <begin position="7237"/>
        <end position="7252"/>
    </location>
</feature>
<feature type="repeat" description="BLUE 18" evidence="16">
    <location>
        <begin position="7253"/>
        <end position="7268"/>
    </location>
</feature>
<feature type="repeat" description="BLUE 19" evidence="16">
    <location>
        <begin position="7269"/>
        <end position="7284"/>
    </location>
</feature>
<feature type="repeat" description="BLUE 20" evidence="16">
    <location>
        <begin position="7285"/>
        <end position="7300"/>
    </location>
</feature>
<feature type="repeat" description="BLUE 21" evidence="16">
    <location>
        <begin position="7301"/>
        <end position="7316"/>
    </location>
</feature>
<feature type="repeat" description="BLUE 22" evidence="16">
    <location>
        <begin position="7317"/>
        <end position="7332"/>
    </location>
</feature>
<feature type="repeat" description="BLUE 23" evidence="16">
    <location>
        <begin position="7333"/>
        <end position="7348"/>
    </location>
</feature>
<feature type="repeat" description="BLUE 24" evidence="16">
    <location>
        <begin position="7349"/>
        <end position="7364"/>
    </location>
</feature>
<feature type="repeat" description="BLUE 25" evidence="16">
    <location>
        <begin position="7365"/>
        <end position="7380"/>
    </location>
</feature>
<feature type="repeat" description="BLUE 26" evidence="16">
    <location>
        <begin position="7381"/>
        <end position="7396"/>
    </location>
</feature>
<feature type="repeat" description="BLUE 27" evidence="16">
    <location>
        <begin position="7397"/>
        <end position="7412"/>
    </location>
</feature>
<feature type="repeat" description="BLUE 28" evidence="16">
    <location>
        <begin position="7413"/>
        <end position="7428"/>
    </location>
</feature>
<feature type="repeat" description="BLUE 29" evidence="16">
    <location>
        <begin position="7429"/>
        <end position="7444"/>
    </location>
</feature>
<feature type="repeat" description="BLUE 30" evidence="16">
    <location>
        <begin position="7445"/>
        <end position="7460"/>
    </location>
</feature>
<feature type="repeat" description="BLUE 31" evidence="16">
    <location>
        <begin position="7461"/>
        <end position="7476"/>
    </location>
</feature>
<feature type="repeat" description="BLUE 32" evidence="16">
    <location>
        <begin position="7477"/>
        <end position="7492"/>
    </location>
</feature>
<feature type="repeat" description="BLUE 33" evidence="16">
    <location>
        <begin position="7493"/>
        <end position="7508"/>
    </location>
</feature>
<feature type="repeat" description="BLUE 34" evidence="16">
    <location>
        <begin position="7509"/>
        <end position="7524"/>
    </location>
</feature>
<feature type="repeat" description="BLUE 35" evidence="16">
    <location>
        <begin position="7525"/>
        <end position="7540"/>
    </location>
</feature>
<feature type="repeat" description="BLUE 36" evidence="16">
    <location>
        <begin position="7541"/>
        <end position="7556"/>
    </location>
</feature>
<feature type="repeat" description="BLUE 37" evidence="16">
    <location>
        <begin position="7557"/>
        <end position="7572"/>
    </location>
</feature>
<feature type="repeat" description="BLUE 38" evidence="16">
    <location>
        <begin position="7573"/>
        <end position="7588"/>
    </location>
</feature>
<feature type="repeat" description="BLUE 39" evidence="16">
    <location>
        <begin position="7589"/>
        <end position="7604"/>
    </location>
</feature>
<feature type="repeat" description="BLUE 40" evidence="16">
    <location>
        <begin position="7605"/>
        <end position="7620"/>
    </location>
</feature>
<feature type="repeat" description="BLUE 41" evidence="16">
    <location>
        <begin position="7621"/>
        <end position="7628"/>
    </location>
</feature>
<feature type="repeat" description="BLUE 42" evidence="16">
    <location>
        <begin position="7629"/>
        <end position="7644"/>
    </location>
</feature>
<feature type="repeat" description="BLUE 43" evidence="16">
    <location>
        <begin position="7645"/>
        <end position="7652"/>
    </location>
</feature>
<feature type="repeat" description="BLUE 44" evidence="16">
    <location>
        <begin position="7653"/>
        <end position="7668"/>
    </location>
</feature>
<feature type="repeat" description="BLUE 45" evidence="16">
    <location>
        <begin position="7669"/>
        <end position="7684"/>
    </location>
</feature>
<feature type="repeat" description="BLUE 46" evidence="16">
    <location>
        <begin position="7685"/>
        <end position="7700"/>
    </location>
</feature>
<feature type="repeat" description="BLUE 47" evidence="16">
    <location>
        <begin position="7701"/>
        <end position="7716"/>
    </location>
</feature>
<feature type="repeat" description="BLUE 48" evidence="16">
    <location>
        <begin position="7717"/>
        <end position="7732"/>
    </location>
</feature>
<feature type="repeat" description="BLUE 49" evidence="16">
    <location>
        <begin position="7733"/>
        <end position="7748"/>
    </location>
</feature>
<feature type="repeat" description="BLUE 50" evidence="16">
    <location>
        <begin position="7749"/>
        <end position="7764"/>
    </location>
</feature>
<feature type="repeat" description="BLUE 51" evidence="16">
    <location>
        <begin position="7765"/>
        <end position="7772"/>
    </location>
</feature>
<feature type="repeat" description="BLUE 52" evidence="16">
    <location>
        <begin position="7773"/>
        <end position="7788"/>
    </location>
</feature>
<feature type="repeat" description="BLUE 53" evidence="16">
    <location>
        <begin position="7789"/>
        <end position="7804"/>
    </location>
</feature>
<feature type="repeat" description="BLUE 54" evidence="16">
    <location>
        <begin position="7805"/>
        <end position="7820"/>
    </location>
</feature>
<feature type="repeat" description="BLUE 55" evidence="16">
    <location>
        <begin position="7821"/>
        <end position="7836"/>
    </location>
</feature>
<feature type="repeat" description="BLUE 56" evidence="16">
    <location>
        <begin position="7837"/>
        <end position="7852"/>
    </location>
</feature>
<feature type="repeat" description="BLUE 57" evidence="16">
    <location>
        <begin position="7853"/>
        <end position="7868"/>
    </location>
</feature>
<feature type="repeat" description="BLUE 58" evidence="16">
    <location>
        <begin position="7869"/>
        <end position="7884"/>
    </location>
</feature>
<feature type="repeat" description="BLUE 59" evidence="16">
    <location>
        <begin position="7885"/>
        <end position="7900"/>
    </location>
</feature>
<feature type="repeat" description="BLUE 60" evidence="16">
    <location>
        <begin position="7901"/>
        <end position="7916"/>
    </location>
</feature>
<feature type="repeat" description="BLUE 61" evidence="16">
    <location>
        <begin position="7917"/>
        <end position="7932"/>
    </location>
</feature>
<feature type="repeat" description="BLUE 62" evidence="16">
    <location>
        <begin position="7933"/>
        <end position="7948"/>
    </location>
</feature>
<feature type="repeat" description="BLUE 63" evidence="16">
    <location>
        <begin position="7949"/>
        <end position="7964"/>
    </location>
</feature>
<feature type="repeat" description="BLUE 64" evidence="16">
    <location>
        <begin position="7965"/>
        <end position="7980"/>
    </location>
</feature>
<feature type="repeat" description="BLUE 65" evidence="16">
    <location>
        <begin position="7981"/>
        <end position="7996"/>
    </location>
</feature>
<feature type="repeat" description="BLUE 66" evidence="16">
    <location>
        <begin position="7997"/>
        <end position="8012"/>
    </location>
</feature>
<feature type="repeat" description="BLUE 67" evidence="16">
    <location>
        <begin position="8013"/>
        <end position="8028"/>
    </location>
</feature>
<feature type="repeat" description="BLUE 68" evidence="16">
    <location>
        <begin position="8029"/>
        <end position="8044"/>
    </location>
</feature>
<feature type="repeat" description="BLUE 69" evidence="16">
    <location>
        <begin position="8045"/>
        <end position="8060"/>
    </location>
</feature>
<feature type="repeat" description="BLUE 70" evidence="16">
    <location>
        <begin position="8061"/>
        <end position="8076"/>
    </location>
</feature>
<feature type="repeat" description="BLUE 71" evidence="16">
    <location>
        <begin position="8077"/>
        <end position="8084"/>
    </location>
</feature>
<feature type="repeat" description="BLUE 72" evidence="16">
    <location>
        <begin position="8085"/>
        <end position="8100"/>
    </location>
</feature>
<feature type="repeat" description="BLUE 73" evidence="16">
    <location>
        <begin position="8101"/>
        <end position="8116"/>
    </location>
</feature>
<feature type="repeat" description="BLUE 74" evidence="16">
    <location>
        <begin position="8117"/>
        <end position="8132"/>
    </location>
</feature>
<feature type="repeat" description="BLUE 75" evidence="16">
    <location>
        <begin position="8133"/>
        <end position="8148"/>
    </location>
</feature>
<feature type="repeat" description="BLUE 76" evidence="16">
    <location>
        <begin position="8149"/>
        <end position="8164"/>
    </location>
</feature>
<feature type="repeat" description="BLUE 77" evidence="16">
    <location>
        <begin position="8165"/>
        <end position="8180"/>
    </location>
</feature>
<feature type="repeat" description="BLUE 78" evidence="16">
    <location>
        <begin position="8181"/>
        <end position="8196"/>
    </location>
</feature>
<feature type="repeat" description="BLUE 79" evidence="16">
    <location>
        <begin position="8197"/>
        <end position="8212"/>
    </location>
</feature>
<feature type="repeat" description="BLUE 80" evidence="16">
    <location>
        <begin position="8213"/>
        <end position="8228"/>
    </location>
</feature>
<feature type="repeat" description="BLUE 81" evidence="16">
    <location>
        <begin position="8229"/>
        <end position="8244"/>
    </location>
</feature>
<feature type="repeat" description="BLUE 82" evidence="16">
    <location>
        <begin position="8245"/>
        <end position="8260"/>
    </location>
</feature>
<feature type="repeat" description="BLUE 83" evidence="16">
    <location>
        <begin position="8261"/>
        <end position="8276"/>
    </location>
</feature>
<feature type="repeat" description="BLUE 84" evidence="16">
    <location>
        <begin position="8277"/>
        <end position="8292"/>
    </location>
</feature>
<feature type="repeat" description="BLUE 85" evidence="16">
    <location>
        <begin position="8293"/>
        <end position="8308"/>
    </location>
</feature>
<feature type="repeat" description="BLUE 86" evidence="16">
    <location>
        <begin position="8309"/>
        <end position="8324"/>
    </location>
</feature>
<feature type="repeat" description="BLUE 87" evidence="16">
    <location>
        <begin position="8325"/>
        <end position="8340"/>
    </location>
</feature>
<feature type="repeat" description="BLUE 88" evidence="16">
    <location>
        <begin position="8341"/>
        <end position="8356"/>
    </location>
</feature>
<feature type="repeat" description="BLUE 89" evidence="16">
    <location>
        <begin position="8357"/>
        <end position="8371"/>
    </location>
</feature>
<feature type="repeat" description="BLUE 90" evidence="16">
    <location>
        <begin position="8373"/>
        <end position="8388"/>
    </location>
</feature>
<feature type="repeat" description="BLUE 91" evidence="16">
    <location>
        <begin position="8389"/>
        <end position="8404"/>
    </location>
</feature>
<feature type="repeat" description="BLUE 92" evidence="16">
    <location>
        <begin position="8405"/>
        <end position="8420"/>
    </location>
</feature>
<feature type="repeat" description="BLUE 93" evidence="16">
    <location>
        <begin position="8421"/>
        <end position="8436"/>
    </location>
</feature>
<feature type="repeat" description="BLUE 94" evidence="16">
    <location>
        <begin position="8437"/>
        <end position="8452"/>
    </location>
</feature>
<feature type="repeat" description="BLUE 95" evidence="16">
    <location>
        <begin position="8453"/>
        <end position="8468"/>
    </location>
</feature>
<feature type="repeat" description="BLUE 96" evidence="16">
    <location>
        <begin position="8469"/>
        <end position="8484"/>
    </location>
</feature>
<feature type="domain" description="Fibronectin type-III 1" evidence="5">
    <location>
        <begin position="8950"/>
        <end position="9041"/>
    </location>
</feature>
<feature type="domain" description="Fibronectin type-III 2" evidence="5">
    <location>
        <begin position="10461"/>
        <end position="10553"/>
    </location>
</feature>
<feature type="domain" description="Ig-like 12" evidence="3">
    <location>
        <begin position="12432"/>
        <end position="12547"/>
    </location>
</feature>
<feature type="domain" description="Ig-like 13" evidence="3">
    <location>
        <begin position="13963"/>
        <end position="14036"/>
    </location>
</feature>
<feature type="domain" description="Fibronectin type-III 3" evidence="5">
    <location>
        <begin position="14153"/>
        <end position="14247"/>
    </location>
</feature>
<feature type="domain" description="Fibronectin type-III 4" evidence="5">
    <location>
        <begin position="14253"/>
        <end position="14348"/>
    </location>
</feature>
<feature type="domain" description="Fibronectin type-III 5" evidence="5">
    <location>
        <begin position="14350"/>
        <end position="14448"/>
    </location>
</feature>
<feature type="domain" description="Ig-like 14" evidence="3">
    <location>
        <begin position="14451"/>
        <end position="14542"/>
    </location>
</feature>
<feature type="domain" description="Ig-like 15" evidence="3">
    <location>
        <begin position="14550"/>
        <end position="14634"/>
    </location>
</feature>
<feature type="domain" description="Ig-like 16" evidence="3">
    <location>
        <begin position="14638"/>
        <end position="14727"/>
    </location>
</feature>
<feature type="domain" description="Fibronectin type-III 6" evidence="5">
    <location>
        <begin position="14826"/>
        <end position="14920"/>
    </location>
</feature>
<feature type="domain" description="Fibronectin type-III 7" evidence="5">
    <location>
        <begin position="14937"/>
        <end position="15027"/>
    </location>
</feature>
<feature type="domain" description="Ig-like 17" evidence="3">
    <location>
        <begin position="15180"/>
        <end position="15274"/>
    </location>
</feature>
<feature type="domain" description="Ig-like 18" evidence="3">
    <location>
        <begin position="15283"/>
        <end position="15371"/>
    </location>
</feature>
<feature type="domain" description="Fibronectin type-III 8" evidence="5">
    <location>
        <begin position="15383"/>
        <end position="15475"/>
    </location>
</feature>
<feature type="domain" description="Fibronectin type-III 9" evidence="5">
    <location>
        <begin position="15503"/>
        <end position="15596"/>
    </location>
</feature>
<feature type="domain" description="Ig-like 19" evidence="3">
    <location>
        <begin position="15599"/>
        <end position="15687"/>
    </location>
</feature>
<feature type="domain" description="Ig-like 20" evidence="3">
    <location>
        <begin position="15692"/>
        <end position="15786"/>
    </location>
</feature>
<feature type="domain" description="Fibronectin type-III 10" evidence="5">
    <location>
        <begin position="15791"/>
        <end position="15883"/>
    </location>
</feature>
<feature type="domain" description="Protein kinase" evidence="4">
    <location>
        <begin position="15934"/>
        <end position="16189"/>
    </location>
</feature>
<feature type="domain" description="Ig-like 21" evidence="3">
    <location>
        <begin position="16268"/>
        <end position="16358"/>
    </location>
</feature>
<feature type="domain" description="Ig-like 22" evidence="3">
    <location>
        <begin position="16500"/>
        <end position="16575"/>
    </location>
</feature>
<feature type="domain" description="Ig-like 23" evidence="3">
    <location>
        <begin position="16605"/>
        <end position="16692"/>
    </location>
</feature>
<feature type="domain" description="Ig-like 24" evidence="3">
    <location>
        <begin position="16705"/>
        <end position="16789"/>
    </location>
</feature>
<feature type="domain" description="Ig-like 25" evidence="3">
    <location>
        <begin position="16829"/>
        <end position="16918"/>
    </location>
</feature>
<feature type="domain" description="Ig-like 26" evidence="3">
    <location>
        <begin position="16932"/>
        <end position="17025"/>
    </location>
</feature>
<feature type="domain" description="Ig-like 27" evidence="3">
    <location>
        <begin position="17037"/>
        <end position="17126"/>
    </location>
</feature>
<feature type="domain" description="Fibronectin type-III 11" evidence="5">
    <location>
        <begin position="17154"/>
        <end position="17245"/>
    </location>
</feature>
<feature type="domain" description="Ig-like 28" evidence="3">
    <location>
        <begin position="17249"/>
        <end position="17336"/>
    </location>
</feature>
<feature type="domain" description="Ig-like 29" evidence="3">
    <location>
        <begin position="17358"/>
        <end position="17447"/>
    </location>
</feature>
<feature type="domain" description="Ig-like 30" evidence="3">
    <location>
        <begin position="17457"/>
        <end position="17548"/>
    </location>
</feature>
<feature type="domain" description="Ig-like 31" evidence="3">
    <location>
        <begin position="17570"/>
        <end position="17661"/>
    </location>
</feature>
<feature type="domain" description="Ig-like 32" evidence="3">
    <location>
        <begin position="17676"/>
        <end position="17765"/>
    </location>
</feature>
<feature type="domain" description="Ig-like 33" evidence="3">
    <location>
        <begin position="17782"/>
        <end position="17873"/>
    </location>
</feature>
<feature type="domain" description="Ig-like 34" evidence="3">
    <location>
        <begin position="18008"/>
        <end position="18097"/>
    </location>
</feature>
<feature type="domain" description="Ig-like 35" evidence="3">
    <location>
        <begin position="18121"/>
        <end position="18213"/>
    </location>
</feature>
<feature type="domain" description="Ig-like 36" evidence="3">
    <location>
        <begin position="18224"/>
        <end position="18316"/>
    </location>
</feature>
<feature type="domain" description="Ig-like 37" evidence="3">
    <location>
        <begin position="18329"/>
        <end position="18417"/>
    </location>
</feature>
<feature type="domain" description="Ig-like 38" evidence="3">
    <location>
        <begin position="18429"/>
        <end position="18519"/>
    </location>
</feature>
<feature type="region of interest" description="Disordered" evidence="6">
    <location>
        <begin position="384"/>
        <end position="404"/>
    </location>
</feature>
<feature type="region of interest" description="Disordered" evidence="6">
    <location>
        <begin position="1336"/>
        <end position="1360"/>
    </location>
</feature>
<feature type="region of interest" description="Disordered" evidence="6">
    <location>
        <begin position="2155"/>
        <end position="2177"/>
    </location>
</feature>
<feature type="region of interest" description="Disordered" evidence="6">
    <location>
        <begin position="2298"/>
        <end position="2459"/>
    </location>
</feature>
<feature type="region of interest" description="Disordered" evidence="6">
    <location>
        <begin position="2614"/>
        <end position="2637"/>
    </location>
</feature>
<feature type="region of interest" description="Disordered" evidence="6">
    <location>
        <begin position="3362"/>
        <end position="3692"/>
    </location>
</feature>
<feature type="region of interest" description="Disordered" evidence="6">
    <location>
        <begin position="4553"/>
        <end position="4599"/>
    </location>
</feature>
<feature type="region of interest" description="Disordered" evidence="6">
    <location>
        <begin position="4634"/>
        <end position="4699"/>
    </location>
</feature>
<feature type="region of interest" description="Disordered" evidence="6">
    <location>
        <begin position="4750"/>
        <end position="4814"/>
    </location>
</feature>
<feature type="region of interest" description="Disordered" evidence="6">
    <location>
        <begin position="4826"/>
        <end position="4855"/>
    </location>
</feature>
<feature type="region of interest" description="Disordered" evidence="6">
    <location>
        <begin position="4912"/>
        <end position="4931"/>
    </location>
</feature>
<feature type="region of interest" description="Disordered" evidence="6">
    <location>
        <begin position="4950"/>
        <end position="4969"/>
    </location>
</feature>
<feature type="region of interest" description="Disordered" evidence="6">
    <location>
        <begin position="4989"/>
        <end position="5216"/>
    </location>
</feature>
<feature type="region of interest" description="Disordered" evidence="6">
    <location>
        <begin position="5267"/>
        <end position="5294"/>
    </location>
</feature>
<feature type="region of interest" description="Disordered" evidence="6">
    <location>
        <begin position="5306"/>
        <end position="5325"/>
    </location>
</feature>
<feature type="region of interest" description="Disordered" evidence="6">
    <location>
        <begin position="5345"/>
        <end position="5372"/>
    </location>
</feature>
<feature type="region of interest" description="Disordered" evidence="6">
    <location>
        <begin position="5428"/>
        <end position="6101"/>
    </location>
</feature>
<feature type="region of interest" description="Disordered" evidence="6">
    <location>
        <begin position="6127"/>
        <end position="6157"/>
    </location>
</feature>
<feature type="region of interest" description="Disordered" evidence="6">
    <location>
        <begin position="6214"/>
        <end position="6900"/>
    </location>
</feature>
<feature type="region of interest" description="Disordered" evidence="6">
    <location>
        <begin position="6930"/>
        <end position="8453"/>
    </location>
</feature>
<feature type="region of interest" description="Disordered" evidence="6">
    <location>
        <begin position="8599"/>
        <end position="8626"/>
    </location>
</feature>
<feature type="region of interest" description="Disordered" evidence="6">
    <location>
        <begin position="9079"/>
        <end position="9104"/>
    </location>
</feature>
<feature type="region of interest" description="Disordered" evidence="6">
    <location>
        <begin position="9147"/>
        <end position="9436"/>
    </location>
</feature>
<feature type="region of interest" description="Disordered" evidence="6">
    <location>
        <begin position="9481"/>
        <end position="9609"/>
    </location>
</feature>
<feature type="region of interest" description="Disordered" evidence="6">
    <location>
        <begin position="9702"/>
        <end position="10224"/>
    </location>
</feature>
<feature type="region of interest" description="Disordered" evidence="6">
    <location>
        <begin position="10239"/>
        <end position="10274"/>
    </location>
</feature>
<feature type="region of interest" description="Disordered" evidence="6">
    <location>
        <begin position="10539"/>
        <end position="11018"/>
    </location>
</feature>
<feature type="region of interest" description="Disordered" evidence="6">
    <location>
        <begin position="11030"/>
        <end position="11111"/>
    </location>
</feature>
<feature type="region of interest" description="Disordered" evidence="6">
    <location>
        <begin position="11123"/>
        <end position="11213"/>
    </location>
</feature>
<feature type="region of interest" description="Disordered" evidence="6">
    <location>
        <begin position="11225"/>
        <end position="11387"/>
    </location>
</feature>
<feature type="region of interest" description="Disordered" evidence="6">
    <location>
        <begin position="11420"/>
        <end position="11592"/>
    </location>
</feature>
<feature type="region of interest" description="Disordered" evidence="6">
    <location>
        <begin position="11624"/>
        <end position="11825"/>
    </location>
</feature>
<feature type="region of interest" description="Disordered" evidence="6">
    <location>
        <begin position="11872"/>
        <end position="11955"/>
    </location>
</feature>
<feature type="region of interest" description="Disordered" evidence="6">
    <location>
        <begin position="11996"/>
        <end position="12054"/>
    </location>
</feature>
<feature type="region of interest" description="Disordered" evidence="6">
    <location>
        <begin position="12397"/>
        <end position="12418"/>
    </location>
</feature>
<feature type="region of interest" description="Disordered" evidence="6">
    <location>
        <begin position="12537"/>
        <end position="12974"/>
    </location>
</feature>
<feature type="region of interest" description="Disordered" evidence="6">
    <location>
        <begin position="13026"/>
        <end position="13045"/>
    </location>
</feature>
<feature type="region of interest" description="Disordered" evidence="6">
    <location>
        <begin position="13065"/>
        <end position="13261"/>
    </location>
</feature>
<feature type="region of interest" description="Disordered" evidence="6">
    <location>
        <begin position="13283"/>
        <end position="13514"/>
    </location>
</feature>
<feature type="region of interest" description="Disordered" evidence="6">
    <location>
        <begin position="13553"/>
        <end position="13574"/>
    </location>
</feature>
<feature type="region of interest" description="Disordered" evidence="6">
    <location>
        <begin position="13594"/>
        <end position="13874"/>
    </location>
</feature>
<feature type="region of interest" description="Disordered" evidence="6">
    <location>
        <begin position="15011"/>
        <end position="15180"/>
    </location>
</feature>
<feature type="region of interest" description="Disordered" evidence="6">
    <location>
        <begin position="15470"/>
        <end position="15503"/>
    </location>
</feature>
<feature type="region of interest" description="Autoinhibitory domain" evidence="7">
    <location>
        <begin position="16206"/>
        <end position="16264"/>
    </location>
</feature>
<feature type="region of interest" description="Disordered" evidence="6">
    <location>
        <begin position="16805"/>
        <end position="16827"/>
    </location>
</feature>
<feature type="region of interest" description="Disordered" evidence="6">
    <location>
        <begin position="17121"/>
        <end position="17169"/>
    </location>
</feature>
<feature type="coiled-coil region" evidence="2">
    <location>
        <begin position="1766"/>
        <end position="1786"/>
    </location>
</feature>
<feature type="coiled-coil region" evidence="2">
    <location>
        <begin position="2011"/>
        <end position="2038"/>
    </location>
</feature>
<feature type="coiled-coil region" evidence="2">
    <location>
        <begin position="2065"/>
        <end position="2085"/>
    </location>
</feature>
<feature type="coiled-coil region" evidence="2">
    <location>
        <begin position="2205"/>
        <end position="2231"/>
    </location>
</feature>
<feature type="coiled-coil region" evidence="2">
    <location>
        <begin position="2606"/>
        <end position="2630"/>
    </location>
</feature>
<feature type="coiled-coil region" evidence="2">
    <location>
        <begin position="5212"/>
        <end position="5235"/>
    </location>
</feature>
<feature type="coiled-coil region" evidence="2">
    <location>
        <begin position="6984"/>
        <end position="7812"/>
    </location>
</feature>
<feature type="coiled-coil region" evidence="2">
    <location>
        <begin position="7876"/>
        <end position="8273"/>
    </location>
</feature>
<feature type="coiled-coil region" evidence="2">
    <location>
        <begin position="8316"/>
        <end position="8490"/>
    </location>
</feature>
<feature type="coiled-coil region" evidence="2">
    <location>
        <begin position="9371"/>
        <end position="9510"/>
    </location>
</feature>
<feature type="coiled-coil region" evidence="2">
    <location>
        <begin position="9577"/>
        <end position="9749"/>
    </location>
</feature>
<feature type="coiled-coil region" evidence="2">
    <location>
        <begin position="9822"/>
        <end position="9995"/>
    </location>
</feature>
<feature type="coiled-coil region" evidence="2">
    <location>
        <begin position="10046"/>
        <end position="10129"/>
    </location>
</feature>
<feature type="coiled-coil region" evidence="2">
    <location>
        <begin position="11018"/>
        <end position="11064"/>
    </location>
</feature>
<feature type="coiled-coil region" evidence="2">
    <location>
        <begin position="12408"/>
        <end position="12428"/>
    </location>
</feature>
<feature type="coiled-coil region" evidence="2">
    <location>
        <begin position="12797"/>
        <end position="12828"/>
    </location>
</feature>
<feature type="coiled-coil region" evidence="2">
    <location>
        <begin position="12980"/>
        <end position="13103"/>
    </location>
</feature>
<feature type="coiled-coil region" evidence="2">
    <location>
        <begin position="13237"/>
        <end position="13380"/>
    </location>
</feature>
<feature type="coiled-coil region" evidence="2">
    <location>
        <begin position="13455"/>
        <end position="13628"/>
    </location>
</feature>
<feature type="compositionally biased region" description="Basic residues" evidence="6">
    <location>
        <begin position="2163"/>
        <end position="2172"/>
    </location>
</feature>
<feature type="compositionally biased region" description="Low complexity" evidence="6">
    <location>
        <begin position="2309"/>
        <end position="2323"/>
    </location>
</feature>
<feature type="compositionally biased region" description="Polar residues" evidence="6">
    <location>
        <begin position="2324"/>
        <end position="2341"/>
    </location>
</feature>
<feature type="compositionally biased region" description="Acidic residues" evidence="6">
    <location>
        <begin position="2621"/>
        <end position="2636"/>
    </location>
</feature>
<feature type="compositionally biased region" description="Acidic residues" evidence="6">
    <location>
        <begin position="3655"/>
        <end position="3665"/>
    </location>
</feature>
<feature type="compositionally biased region" description="Basic and acidic residues" evidence="6">
    <location>
        <begin position="4555"/>
        <end position="4577"/>
    </location>
</feature>
<feature type="compositionally biased region" description="Basic and acidic residues" evidence="6">
    <location>
        <begin position="4638"/>
        <end position="4651"/>
    </location>
</feature>
<feature type="compositionally biased region" description="Basic and acidic residues" evidence="6">
    <location>
        <begin position="4677"/>
        <end position="4691"/>
    </location>
</feature>
<feature type="compositionally biased region" description="Basic and acidic residues" evidence="6">
    <location>
        <begin position="4960"/>
        <end position="4969"/>
    </location>
</feature>
<feature type="compositionally biased region" description="Basic and acidic residues" evidence="6">
    <location>
        <begin position="5038"/>
        <end position="5051"/>
    </location>
</feature>
<feature type="compositionally biased region" description="Basic and acidic residues" evidence="6">
    <location>
        <begin position="5116"/>
        <end position="5129"/>
    </location>
</feature>
<feature type="compositionally biased region" description="Basic and acidic residues" evidence="6">
    <location>
        <begin position="5155"/>
        <end position="5168"/>
    </location>
</feature>
<feature type="compositionally biased region" description="Basic and acidic residues" evidence="6">
    <location>
        <begin position="5316"/>
        <end position="5325"/>
    </location>
</feature>
<feature type="compositionally biased region" description="Basic and acidic residues" evidence="6">
    <location>
        <begin position="5477"/>
        <end position="5490"/>
    </location>
</feature>
<feature type="compositionally biased region" description="Basic and acidic residues" evidence="6">
    <location>
        <begin position="5516"/>
        <end position="5529"/>
    </location>
</feature>
<feature type="compositionally biased region" description="Basic and acidic residues" evidence="6">
    <location>
        <begin position="6690"/>
        <end position="6704"/>
    </location>
</feature>
<feature type="compositionally biased region" description="Basic and acidic residues" evidence="6">
    <location>
        <begin position="6729"/>
        <end position="6743"/>
    </location>
</feature>
<feature type="compositionally biased region" description="Basic and acidic residues" evidence="6">
    <location>
        <begin position="6768"/>
        <end position="6782"/>
    </location>
</feature>
<feature type="compositionally biased region" description="Basic and acidic residues" evidence="6">
    <location>
        <begin position="6807"/>
        <end position="6821"/>
    </location>
</feature>
<feature type="compositionally biased region" description="Basic and acidic residues" evidence="6">
    <location>
        <begin position="6846"/>
        <end position="6860"/>
    </location>
</feature>
<feature type="compositionally biased region" description="Basic and acidic residues" evidence="6">
    <location>
        <begin position="6885"/>
        <end position="6899"/>
    </location>
</feature>
<feature type="compositionally biased region" description="Basic and acidic residues" evidence="6">
    <location>
        <begin position="6972"/>
        <end position="7606"/>
    </location>
</feature>
<feature type="compositionally biased region" description="Basic and acidic residues" evidence="6">
    <location>
        <begin position="7613"/>
        <end position="7630"/>
    </location>
</feature>
<feature type="compositionally biased region" description="Basic and acidic residues" evidence="6">
    <location>
        <begin position="7637"/>
        <end position="8062"/>
    </location>
</feature>
<feature type="compositionally biased region" description="Basic and acidic residues" evidence="6">
    <location>
        <begin position="8069"/>
        <end position="8453"/>
    </location>
</feature>
<feature type="compositionally biased region" description="Basic residues" evidence="6">
    <location>
        <begin position="8599"/>
        <end position="8611"/>
    </location>
</feature>
<feature type="compositionally biased region" description="Basic and acidic residues" evidence="6">
    <location>
        <begin position="8612"/>
        <end position="8626"/>
    </location>
</feature>
<feature type="compositionally biased region" description="Basic residues" evidence="6">
    <location>
        <begin position="9084"/>
        <end position="9093"/>
    </location>
</feature>
<feature type="compositionally biased region" description="Basic and acidic residues" evidence="6">
    <location>
        <begin position="9172"/>
        <end position="9184"/>
    </location>
</feature>
<feature type="compositionally biased region" description="Basic and acidic residues" evidence="6">
    <location>
        <begin position="9191"/>
        <end position="9202"/>
    </location>
</feature>
<feature type="compositionally biased region" description="Polar residues" evidence="6">
    <location>
        <begin position="9213"/>
        <end position="9231"/>
    </location>
</feature>
<feature type="compositionally biased region" description="Basic and acidic residues" evidence="6">
    <location>
        <begin position="9232"/>
        <end position="9267"/>
    </location>
</feature>
<feature type="compositionally biased region" description="Low complexity" evidence="6">
    <location>
        <begin position="9273"/>
        <end position="9283"/>
    </location>
</feature>
<feature type="compositionally biased region" description="Basic and acidic residues" evidence="6">
    <location>
        <begin position="9295"/>
        <end position="9332"/>
    </location>
</feature>
<feature type="compositionally biased region" description="Low complexity" evidence="6">
    <location>
        <begin position="9346"/>
        <end position="9359"/>
    </location>
</feature>
<feature type="compositionally biased region" description="Basic and acidic residues" evidence="6">
    <location>
        <begin position="9373"/>
        <end position="9436"/>
    </location>
</feature>
<feature type="compositionally biased region" description="Basic and acidic residues" evidence="6">
    <location>
        <begin position="9481"/>
        <end position="9521"/>
    </location>
</feature>
<feature type="compositionally biased region" description="Low complexity" evidence="6">
    <location>
        <begin position="9547"/>
        <end position="9558"/>
    </location>
</feature>
<feature type="compositionally biased region" description="Basic and acidic residues" evidence="6">
    <location>
        <begin position="9578"/>
        <end position="9609"/>
    </location>
</feature>
<feature type="compositionally biased region" description="Basic and acidic residues" evidence="6">
    <location>
        <begin position="9702"/>
        <end position="9783"/>
    </location>
</feature>
<feature type="compositionally biased region" description="Polar residues" evidence="6">
    <location>
        <begin position="9798"/>
        <end position="9809"/>
    </location>
</feature>
<feature type="compositionally biased region" description="Basic and acidic residues" evidence="6">
    <location>
        <begin position="9819"/>
        <end position="10004"/>
    </location>
</feature>
<feature type="compositionally biased region" description="Basic and acidic residues" evidence="6">
    <location>
        <begin position="10040"/>
        <end position="10149"/>
    </location>
</feature>
<feature type="compositionally biased region" description="Basic and acidic residues" evidence="6">
    <location>
        <begin position="10162"/>
        <end position="10196"/>
    </location>
</feature>
<feature type="compositionally biased region" description="Basic residues" evidence="6">
    <location>
        <begin position="10197"/>
        <end position="10206"/>
    </location>
</feature>
<feature type="compositionally biased region" description="Basic and acidic residues" evidence="6">
    <location>
        <begin position="10207"/>
        <end position="10224"/>
    </location>
</feature>
<feature type="compositionally biased region" description="Polar residues" evidence="6">
    <location>
        <begin position="10239"/>
        <end position="10250"/>
    </location>
</feature>
<feature type="compositionally biased region" description="Basic and acidic residues" evidence="6">
    <location>
        <begin position="10566"/>
        <end position="10609"/>
    </location>
</feature>
<feature type="compositionally biased region" description="Polar residues" evidence="6">
    <location>
        <begin position="10612"/>
        <end position="10637"/>
    </location>
</feature>
<feature type="compositionally biased region" description="Acidic residues" evidence="6">
    <location>
        <begin position="10663"/>
        <end position="10680"/>
    </location>
</feature>
<feature type="compositionally biased region" description="Basic and acidic residues" evidence="6">
    <location>
        <begin position="10707"/>
        <end position="10716"/>
    </location>
</feature>
<feature type="compositionally biased region" description="Polar residues" evidence="6">
    <location>
        <begin position="10779"/>
        <end position="10790"/>
    </location>
</feature>
<feature type="compositionally biased region" description="Basic and acidic residues" evidence="6">
    <location>
        <begin position="10840"/>
        <end position="10852"/>
    </location>
</feature>
<feature type="compositionally biased region" description="Basic and acidic residues" evidence="6">
    <location>
        <begin position="10863"/>
        <end position="10884"/>
    </location>
</feature>
<feature type="compositionally biased region" description="Polar residues" evidence="6">
    <location>
        <begin position="10961"/>
        <end position="10975"/>
    </location>
</feature>
<feature type="compositionally biased region" description="Basic and acidic residues" evidence="6">
    <location>
        <begin position="10999"/>
        <end position="11009"/>
    </location>
</feature>
<feature type="compositionally biased region" description="Basic and acidic residues" evidence="6">
    <location>
        <begin position="11045"/>
        <end position="11055"/>
    </location>
</feature>
<feature type="compositionally biased region" description="Basic and acidic residues" evidence="6">
    <location>
        <begin position="11076"/>
        <end position="11089"/>
    </location>
</feature>
<feature type="compositionally biased region" description="Polar residues" evidence="6">
    <location>
        <begin position="11090"/>
        <end position="11108"/>
    </location>
</feature>
<feature type="compositionally biased region" description="Basic and acidic residues" evidence="6">
    <location>
        <begin position="11159"/>
        <end position="11173"/>
    </location>
</feature>
<feature type="compositionally biased region" description="Low complexity" evidence="6">
    <location>
        <begin position="11174"/>
        <end position="11187"/>
    </location>
</feature>
<feature type="compositionally biased region" description="Basic and acidic residues" evidence="6">
    <location>
        <begin position="11195"/>
        <end position="11211"/>
    </location>
</feature>
<feature type="compositionally biased region" description="Basic and acidic residues" evidence="6">
    <location>
        <begin position="11271"/>
        <end position="11280"/>
    </location>
</feature>
<feature type="compositionally biased region" description="Basic and acidic residues" evidence="6">
    <location>
        <begin position="11295"/>
        <end position="11318"/>
    </location>
</feature>
<feature type="compositionally biased region" description="Polar residues" evidence="6">
    <location>
        <begin position="11374"/>
        <end position="11387"/>
    </location>
</feature>
<feature type="compositionally biased region" description="Basic and acidic residues" evidence="6">
    <location>
        <begin position="11440"/>
        <end position="11464"/>
    </location>
</feature>
<feature type="compositionally biased region" description="Basic and acidic residues" evidence="6">
    <location>
        <begin position="11472"/>
        <end position="11485"/>
    </location>
</feature>
<feature type="compositionally biased region" description="Polar residues" evidence="6">
    <location>
        <begin position="11503"/>
        <end position="11515"/>
    </location>
</feature>
<feature type="compositionally biased region" description="Basic and acidic residues" evidence="6">
    <location>
        <begin position="11624"/>
        <end position="11635"/>
    </location>
</feature>
<feature type="compositionally biased region" description="Basic and acidic residues" evidence="6">
    <location>
        <begin position="11645"/>
        <end position="11669"/>
    </location>
</feature>
<feature type="compositionally biased region" description="Basic and acidic residues" evidence="6">
    <location>
        <begin position="11722"/>
        <end position="11735"/>
    </location>
</feature>
<feature type="compositionally biased region" description="Polar residues" evidence="6">
    <location>
        <begin position="11754"/>
        <end position="11767"/>
    </location>
</feature>
<feature type="compositionally biased region" description="Basic and acidic residues" evidence="6">
    <location>
        <begin position="11916"/>
        <end position="11937"/>
    </location>
</feature>
<feature type="compositionally biased region" description="Basic and acidic residues" evidence="6">
    <location>
        <begin position="12537"/>
        <end position="12547"/>
    </location>
</feature>
<feature type="compositionally biased region" description="Basic and acidic residues" evidence="6">
    <location>
        <begin position="12555"/>
        <end position="12567"/>
    </location>
</feature>
<feature type="compositionally biased region" description="Basic and acidic residues" evidence="6">
    <location>
        <begin position="12609"/>
        <end position="12689"/>
    </location>
</feature>
<feature type="compositionally biased region" description="Low complexity" evidence="6">
    <location>
        <begin position="12690"/>
        <end position="12701"/>
    </location>
</feature>
<feature type="compositionally biased region" description="Polar residues" evidence="6">
    <location>
        <begin position="12729"/>
        <end position="12740"/>
    </location>
</feature>
<feature type="compositionally biased region" description="Basic and acidic residues" evidence="6">
    <location>
        <begin position="12766"/>
        <end position="12839"/>
    </location>
</feature>
<feature type="compositionally biased region" description="Basic and acidic residues" evidence="6">
    <location>
        <begin position="12852"/>
        <end position="12865"/>
    </location>
</feature>
<feature type="compositionally biased region" description="Basic and acidic residues" evidence="6">
    <location>
        <begin position="12889"/>
        <end position="12940"/>
    </location>
</feature>
<feature type="compositionally biased region" description="Basic and acidic residues" evidence="6">
    <location>
        <begin position="13065"/>
        <end position="13124"/>
    </location>
</feature>
<feature type="compositionally biased region" description="Basic and acidic residues" evidence="6">
    <location>
        <begin position="13133"/>
        <end position="13145"/>
    </location>
</feature>
<feature type="compositionally biased region" description="Basic and acidic residues" evidence="6">
    <location>
        <begin position="13176"/>
        <end position="13191"/>
    </location>
</feature>
<feature type="compositionally biased region" description="Basic and acidic residues" evidence="6">
    <location>
        <begin position="13203"/>
        <end position="13261"/>
    </location>
</feature>
<feature type="compositionally biased region" description="Basic and acidic residues" evidence="6">
    <location>
        <begin position="13283"/>
        <end position="13327"/>
    </location>
</feature>
<feature type="compositionally biased region" description="Basic and acidic residues" evidence="6">
    <location>
        <begin position="13337"/>
        <end position="13354"/>
    </location>
</feature>
<feature type="compositionally biased region" description="Basic and acidic residues" evidence="6">
    <location>
        <begin position="13361"/>
        <end position="13416"/>
    </location>
</feature>
<feature type="compositionally biased region" description="Polar residues" evidence="6">
    <location>
        <begin position="13431"/>
        <end position="13442"/>
    </location>
</feature>
<feature type="compositionally biased region" description="Basic and acidic residues" evidence="6">
    <location>
        <begin position="13452"/>
        <end position="13514"/>
    </location>
</feature>
<feature type="compositionally biased region" description="Basic and acidic residues" evidence="6">
    <location>
        <begin position="13594"/>
        <end position="13637"/>
    </location>
</feature>
<feature type="compositionally biased region" description="Low complexity" evidence="6">
    <location>
        <begin position="13651"/>
        <end position="13662"/>
    </location>
</feature>
<feature type="compositionally biased region" description="Polar residues" evidence="6">
    <location>
        <begin position="13684"/>
        <end position="13696"/>
    </location>
</feature>
<feature type="compositionally biased region" description="Basic and acidic residues" evidence="6">
    <location>
        <begin position="13697"/>
        <end position="13735"/>
    </location>
</feature>
<feature type="compositionally biased region" description="Low complexity" evidence="6">
    <location>
        <begin position="13747"/>
        <end position="13760"/>
    </location>
</feature>
<feature type="compositionally biased region" description="Basic and acidic residues" evidence="6">
    <location>
        <begin position="13761"/>
        <end position="13770"/>
    </location>
</feature>
<feature type="compositionally biased region" description="Polar residues" evidence="6">
    <location>
        <begin position="13784"/>
        <end position="13793"/>
    </location>
</feature>
<feature type="compositionally biased region" description="Basic and acidic residues" evidence="6">
    <location>
        <begin position="13795"/>
        <end position="13808"/>
    </location>
</feature>
<feature type="compositionally biased region" description="Basic and acidic residues" evidence="6">
    <location>
        <begin position="13824"/>
        <end position="13843"/>
    </location>
</feature>
<feature type="compositionally biased region" description="Basic and acidic residues" evidence="6">
    <location>
        <begin position="15034"/>
        <end position="15060"/>
    </location>
</feature>
<feature type="compositionally biased region" description="Basic and acidic residues" evidence="6">
    <location>
        <begin position="15085"/>
        <end position="15117"/>
    </location>
</feature>
<feature type="compositionally biased region" description="Polar residues" evidence="6">
    <location>
        <begin position="15118"/>
        <end position="15132"/>
    </location>
</feature>
<feature type="compositionally biased region" description="Basic and acidic residues" evidence="6">
    <location>
        <begin position="15133"/>
        <end position="15177"/>
    </location>
</feature>
<feature type="compositionally biased region" description="Basic and acidic residues" evidence="6">
    <location>
        <begin position="15473"/>
        <end position="15503"/>
    </location>
</feature>
<feature type="compositionally biased region" description="Basic and acidic residues" evidence="6">
    <location>
        <begin position="17129"/>
        <end position="17150"/>
    </location>
</feature>
<feature type="active site" description="Proton acceptor" evidence="4">
    <location>
        <position position="16055"/>
    </location>
</feature>
<feature type="binding site" evidence="4">
    <location>
        <begin position="15940"/>
        <end position="15948"/>
    </location>
    <ligand>
        <name>ATP</name>
        <dbReference type="ChEBI" id="CHEBI:30616"/>
    </ligand>
</feature>
<feature type="binding site" evidence="4">
    <location>
        <position position="15963"/>
    </location>
    <ligand>
        <name>ATP</name>
        <dbReference type="ChEBI" id="CHEBI:30616"/>
    </ligand>
</feature>
<feature type="disulfide bond" evidence="3">
    <location>
        <begin position="842"/>
        <end position="897"/>
    </location>
</feature>
<feature type="disulfide bond" evidence="3">
    <location>
        <begin position="1700"/>
        <end position="1751"/>
    </location>
</feature>
<feature type="disulfide bond" evidence="3">
    <location>
        <begin position="3919"/>
        <end position="3969"/>
    </location>
</feature>
<feature type="disulfide bond" evidence="3">
    <location>
        <begin position="4059"/>
        <end position="4109"/>
    </location>
</feature>
<feature type="disulfide bond" evidence="3">
    <location>
        <begin position="14568"/>
        <end position="14618"/>
    </location>
</feature>
<feature type="disulfide bond" evidence="3">
    <location>
        <begin position="16290"/>
        <end position="16342"/>
    </location>
</feature>
<feature type="disulfide bond" evidence="3">
    <location>
        <begin position="16508"/>
        <end position="16571"/>
    </location>
</feature>
<feature type="disulfide bond" evidence="3">
    <location>
        <begin position="16627"/>
        <end position="16677"/>
    </location>
</feature>
<feature type="disulfide bond" evidence="3">
    <location>
        <begin position="16726"/>
        <end position="16778"/>
    </location>
</feature>
<feature type="disulfide bond" evidence="3">
    <location>
        <begin position="17379"/>
        <end position="17431"/>
    </location>
</feature>
<feature type="disulfide bond" evidence="3">
    <location>
        <begin position="17478"/>
        <end position="17530"/>
    </location>
</feature>
<feature type="disulfide bond" evidence="3">
    <location>
        <begin position="17697"/>
        <end position="17754"/>
    </location>
</feature>
<feature type="disulfide bond" evidence="3">
    <location>
        <begin position="18143"/>
        <end position="18195"/>
    </location>
</feature>
<feature type="splice variant" id="VSP_058045" description="In isoform h and isoform i." evidence="14">
    <location>
        <begin position="1"/>
        <end position="15826"/>
    </location>
</feature>
<feature type="splice variant" id="VSP_058046" description="In isoform a." evidence="14">
    <original>V</original>
    <variation>ERRTDGKLEKFQIEFKKKLVQI</variation>
    <location>
        <position position="296"/>
    </location>
</feature>
<feature type="splice variant" id="VSP_058047" description="In isoform a and isoform b." evidence="14">
    <original>DAASIVESRFHPQPPKPPRAGTSRRFLPEPPKFVTTLPSVITVNAEEKLVLSVDVQAIPAAEFAWHVNGFEVKKSQSVVLLDEHNKSTLVLHPPVKQGKYKVTARNDVGSDSVTTQVTRIGEVKDGAGSEPPDIVESAVTVTCSHEEDVGSHSSLQTVRRIQEMQEEDEVDPIKPFIEATSPKVKESVEHPFANILNPKKREERLSPSGKGKHLLFAPRITAHPSESVFKILDGSPLKLRVMASSLPPATFLWMLNNFELRSNQNVTIRNDEENSSEIEFQKAPNGNVTVSAKNHLGEDRWTGKVILQYESPPPGQKITTIEKVTESWTLEEAVITQVVPTAADPGDRIVIIVRFDENKTSNCQFNWTINGVNIEKLEENLVAVESTEFESSLIVEKLEEQLCGEVVCVVKNQHGEVFSSSAHLRIR</original>
    <variation>G</variation>
    <location>
        <begin position="376"/>
        <end position="802"/>
    </location>
</feature>
<feature type="splice variant" id="VSP_058048" description="In isoform a and isoform b." evidence="14">
    <original>EEEDNQI</original>
    <variation>VSLRLKI</variation>
    <location>
        <begin position="1123"/>
        <end position="1129"/>
    </location>
</feature>
<feature type="splice variant" id="VSP_058049" description="In isoform a and isoform b." evidence="14">
    <location>
        <begin position="1130"/>
        <end position="18562"/>
    </location>
</feature>
<feature type="splice variant" id="VSP_058050" description="In isoform c." evidence="14">
    <original>KTERSEEQCEETIIPRGVVATIQCQTSEPQESIQWSKD</original>
    <variation>SVCISNVEFRVAHLCVNSLTSTLHALKRKRISNNSLHN</variation>
    <location>
        <begin position="3178"/>
        <end position="3215"/>
    </location>
</feature>
<feature type="splice variant" id="VSP_058051" description="In isoform c." evidence="14">
    <location>
        <begin position="3216"/>
        <end position="18562"/>
    </location>
</feature>
<feature type="splice variant" id="VSP_058052" description="In isoform d." evidence="14">
    <location>
        <begin position="5409"/>
        <end position="5428"/>
    </location>
</feature>
<feature type="splice variant" id="VSP_058053" description="In isoform d." evidence="14">
    <original>VSKKPENTKESEGHKKRDRKESEDHDE</original>
    <variation>GKFRRNWKVTVNHRSLNLINVACCVIA</variation>
    <location>
        <begin position="10572"/>
        <end position="10598"/>
    </location>
</feature>
<feature type="splice variant" id="VSP_058054" description="In isoform d." evidence="14">
    <location>
        <begin position="10599"/>
        <end position="18562"/>
    </location>
</feature>
<feature type="splice variant" id="VSP_058055" description="In isoform f and isoform i." evidence="14">
    <location>
        <begin position="16191"/>
        <end position="16205"/>
    </location>
</feature>
<feature type="splice variant" id="VSP_058056" description="In isoform e, isoform f, isoform h and isoform i." evidence="14">
    <original>VLSMFYSSLFLVVF</original>
    <variation>GSSAALPQRRTIRR</variation>
    <location>
        <begin position="18521"/>
        <end position="18534"/>
    </location>
</feature>
<feature type="splice variant" id="VSP_058057" description="In isoform e, isoform f, isoform h and isoform i." evidence="14">
    <location>
        <begin position="18535"/>
        <end position="18562"/>
    </location>
</feature>
<proteinExistence type="evidence at protein level"/>
<name>TTN1_CAEEL</name>
<reference evidence="17" key="1">
    <citation type="journal article" date="2002" name="J. Mol. Biol.">
        <title>Titins in C.elegans with unusual features: coiled-coil domains, novel regulation of kinase activity and two new possible elastic regions.</title>
        <authorList>
            <person name="Flaherty D.B."/>
            <person name="Gernert K.M."/>
            <person name="Shmeleva N."/>
            <person name="Tang X."/>
            <person name="Mercer K.B."/>
            <person name="Borodovsky M."/>
            <person name="Benian G.M."/>
        </authorList>
    </citation>
    <scope>NUCLEOTIDE SEQUENCE [GENOMIC DNA]</scope>
    <scope>IDENTIFICATION OF ISOFORMS E; F; D; H AND I</scope>
    <scope>CATALYTIC ACTIVITY</scope>
    <scope>TISSUE SPECIFICITY</scope>
    <scope>DEVELOPMENTAL STAGE</scope>
    <scope>REGION</scope>
    <scope>REPEAT</scope>
</reference>
<reference evidence="20" key="2">
    <citation type="journal article" date="1998" name="Science">
        <title>Genome sequence of the nematode C. elegans: a platform for investigating biology.</title>
        <authorList>
            <consortium name="The C. elegans sequencing consortium"/>
        </authorList>
    </citation>
    <scope>NUCLEOTIDE SEQUENCE [LARGE SCALE GENOMIC DNA]</scope>
    <source>
        <strain evidence="20">Bristol N2</strain>
    </source>
</reference>
<reference evidence="14" key="3">
    <citation type="journal article" date="2006" name="J. Cell Sci.">
        <title>Nuclear titin interacts with A- and B-type lamins in vitro and in vivo.</title>
        <authorList>
            <person name="Zastrow M.S."/>
            <person name="Flaherty D.B."/>
            <person name="Benian G.M."/>
            <person name="Wilson K.L."/>
        </authorList>
    </citation>
    <scope>SUBCELLULAR LOCATION</scope>
    <scope>TISSUE SPECIFICITY</scope>
</reference>
<reference evidence="14" key="4">
    <citation type="journal article" date="2008" name="Biophys. J.">
        <title>Single-molecule force spectroscopy reveals a stepwise unfolding of Caenorhabditis elegans giant protein kinase domains.</title>
        <authorList>
            <person name="Greene D.N."/>
            <person name="Garcia T."/>
            <person name="Sutton R.B."/>
            <person name="Gernert K.M."/>
            <person name="Benian G.M."/>
            <person name="Oberhauser A.F."/>
        </authorList>
    </citation>
    <scope>FUNCTION</scope>
    <scope>CATALYTIC ACTIVITY</scope>
    <scope>COFACTOR</scope>
</reference>
<reference evidence="14" key="5">
    <citation type="journal article" date="2010" name="J. Mol. Biol.">
        <title>Extensive and modular intrinsically disordered segments in C. elegans TTN-1 and implications in filament binding, elasticity and oblique striation.</title>
        <authorList>
            <person name="Forbes J.G."/>
            <person name="Flaherty D.B."/>
            <person name="Ma K."/>
            <person name="Qadota H."/>
            <person name="Benian G.M."/>
            <person name="Wang K."/>
        </authorList>
    </citation>
    <scope>FUNCTION</scope>
    <scope>INTERACTION WITH ACTIN AND MYOSIN</scope>
    <scope>SUBCELLULAR LOCATION</scope>
    <scope>TISSUE SPECIFICITY</scope>
    <scope>REPEAT</scope>
</reference>
<organism evidence="20">
    <name type="scientific">Caenorhabditis elegans</name>
    <dbReference type="NCBI Taxonomy" id="6239"/>
    <lineage>
        <taxon>Eukaryota</taxon>
        <taxon>Metazoa</taxon>
        <taxon>Ecdysozoa</taxon>
        <taxon>Nematoda</taxon>
        <taxon>Chromadorea</taxon>
        <taxon>Rhabditida</taxon>
        <taxon>Rhabditina</taxon>
        <taxon>Rhabditomorpha</taxon>
        <taxon>Rhabditoidea</taxon>
        <taxon>Rhabditidae</taxon>
        <taxon>Peloderinae</taxon>
        <taxon>Caenorhabditis</taxon>
    </lineage>
</organism>
<keyword id="KW-0877">Alternative promoter usage</keyword>
<keyword id="KW-0025">Alternative splicing</keyword>
<keyword id="KW-0067">ATP-binding</keyword>
<keyword id="KW-0175">Coiled coil</keyword>
<keyword id="KW-0963">Cytoplasm</keyword>
<keyword id="KW-1015">Disulfide bond</keyword>
<keyword id="KW-0393">Immunoglobulin domain</keyword>
<keyword id="KW-0418">Kinase</keyword>
<keyword id="KW-0460">Magnesium</keyword>
<keyword id="KW-0472">Membrane</keyword>
<keyword id="KW-0479">Metal-binding</keyword>
<keyword id="KW-0547">Nucleotide-binding</keyword>
<keyword id="KW-0539">Nucleus</keyword>
<keyword id="KW-1185">Reference proteome</keyword>
<keyword id="KW-0677">Repeat</keyword>
<keyword id="KW-0723">Serine/threonine-protein kinase</keyword>
<keyword id="KW-0808">Transferase</keyword>